<sequence length="1922" mass="218682">MKSPALQPLSMAGLQLMTPASSPMGPFFGLPWQQEAIHDNIYTPRKYQVELLEAALDHNTIVCLNTGSGKTFIAVLLTKELSYQIRGDFSRNGKRTVFLVNSANQVAQQVSAVRTHSDLKVGEYSNLEVNASWTKERWNQEFTKHQVLIMTCYVALNVLKNGYLSLSDINLLVFDECHLAILDHPYREIMKLCENCPSCPRILGLTASILNGKCDPEELEEKIQKLEKILKSNAETATDLVVLDRYTSQPCEIVVDCGPFTDRSGLYERLLMELEEALNFINDCNISVHSKERDSTLISKQILSDCRAVLVVLGPWCADKVAGMMVRELQKYIKHEQEELHRKFLLFTDTFLRKIHALCEEHFSPASLDLKFVTPKVIKLLEILRKYKPYERQQFESVEWYNNRNQDNYVSWSDSEDDDEDEEIEEKEKPETNFPSPFTNILCGIIFVERRYTAVVLNRLIKEAGKQDPELAYISSNFITGHGIGKNQPRNKQMEAEFRKQEEVLRKFRAHETNLLIATSIVEEGVDIPKCNLVVRFDLPTEYRSYVQSKGRARAPISNYIMLADTDKIKSFEEDLKTYKAIEKILRNKCSKSVDTGETDIDPVMDDDDVFPPYVLRPDDGGPRVTINTAIGHINRYCARLPSDPFTHLAPKCRTRELPDGTFYSTLYLPINSPLRASIVGPPMSCVRLAERVVALICCEKLHKIGELDDHLMPVGKETVKYEEELDLHDEEETSVPGRPGSTKRRQCYPKAIPECLRDSYPRPDQPCYLYVIGMVLTTPLPDELNFRRRKLYPPEDTTRCFGILTAKPIPQIPHFPVYTRSGEVTISIELKKSGFMLSLQMLELITRLHQYIFSHILRLEKPALEFKPTDADSAYCVLPLNVVNDSSTLDIDFKFMEDIEKSEARIGIPSTKYTKETPFVFKLEDYQDAVIIPRYRNFDQPHRFYVADVYTDLTPLSKFPSPEYETFAEYYKTKYNLDLTNLNQPLLDVDHTSSRLNLLTPRHLNQKGKALPLSSAEKRKAKWESLQNKQILVPELCAIHPIPASLWRKAVCLPSILYRLHCLLTAEELRAQTASDAGVGVRSLPADFRYPNLDFGWKKSIDSKSFISISNSSSAENDNYCKHSTIVPENAAHQGANRTSSLENHDQMSVNCRTLLSESPGKLHVEVSADLTAINGLSYNQNLANGSYDLANRDFCQGNQLNYYKQEIPVQPTTSYSIQNLYSYENQPQPSDECTLLSNKYLDGNANKSTSDGSPVMAVMPGTTDTIQVLKGRMDSEQSPSIGYSSRTLGPNPGLILQALTLSNASDGFNLERLEMLGDSFLKHAITTYLFCTYPDAHEGRLSYMRSKKVSNCNLYRLGKKKGLPSRMVVSIFDPPVNWLPPGYVVNQDKSNTDKWEKDEMTKDCMLANGKLDEDYEEEDEEEESLMWRAPKEEADYEDDFLEYDQEHIRFIDNMLMGSGAFVKKISLSPFSTTDSAYEWKMPKKSSLGSMPFSSDFEDFDYSSWDAMCYLDPSKAVEEDDFVVGFWNPSEENCGVDTGKQSISYDLHTEQCIADKSIADCVEALLGCYLTSCGERAAQLFLCSLGLKVLPVIKRTDREKALCPTRENFNSQQKNLSVSCAAASVASSRSSVLKDSEYGCLKIPPRCMFDHPDADKTLNHLISGFENFEKKINYRFKNKAYLLQAFTHASYHYNTITDCYQRLEFLGDAILDYLITKHLYEDPRQHSPGVLTDLRSALVNNTIFASLAVKYDYHKYFKAVSPELFHVIDDFVQFQLEKNEMQGMDSELRRSEEDEEKEEDIEVPKAMGDIFESLAGAIYMDSGMSLETVWQVYYPMMRPLIEKFSANVPRSPVRELLEMEPETAKFSPAERTYDGKVRVTVEVVGKGKFKGVGRSYRIAKSAAARRALRSLKANQPQVPNS</sequence>
<reference key="1">
    <citation type="journal article" date="2000" name="Biochim. Biophys. Acta">
        <title>Molecular cloning and characterization of a novel human gene (HERNA) which encodes a putative RNA-helicase.</title>
        <authorList>
            <person name="Matsuda S."/>
            <person name="Ichigotani Y."/>
            <person name="Okuda T."/>
            <person name="Irimura T."/>
            <person name="Nakatsugawa S."/>
            <person name="Hamaguchi M."/>
        </authorList>
    </citation>
    <scope>NUCLEOTIDE SEQUENCE [MRNA] (ISOFORM 1)</scope>
</reference>
<reference key="2">
    <citation type="journal article" date="2010" name="FEBS Lett.">
        <title>A novel splice variant of the human dicer gene is expressed in neuroblastoma cells.</title>
        <authorList>
            <person name="Potenza N."/>
            <person name="Papa U."/>
            <person name="Scaruffi P."/>
            <person name="Mosca N."/>
            <person name="Tonini G.P."/>
            <person name="Russo A."/>
        </authorList>
    </citation>
    <scope>NUCLEOTIDE SEQUENCE [MRNA] (ISOFORM 2)</scope>
    <scope>ALTERNATIVE SPLICING</scope>
    <source>
        <tissue>Neuroblastoma</tissue>
    </source>
</reference>
<reference key="3">
    <citation type="submission" date="2002-06" db="EMBL/GenBank/DDBJ databases">
        <title>RNA binding and processing by recombinant human Dicer.</title>
        <authorList>
            <person name="Provost P."/>
            <person name="Dishart D."/>
            <person name="Doucet D."/>
            <person name="Hermansson A."/>
            <person name="Frendewey D."/>
            <person name="Samuelsson B."/>
            <person name="Radmark O."/>
        </authorList>
    </citation>
    <scope>NUCLEOTIDE SEQUENCE [MRNA] (ISOFORM 1)</scope>
    <source>
        <tissue>Lung</tissue>
    </source>
</reference>
<reference key="4">
    <citation type="journal article" date="1999" name="DNA Res.">
        <title>Prediction of the coding sequences of unidentified human genes. XIII. The complete sequences of 100 new cDNA clones from brain which code for large proteins in vitro.</title>
        <authorList>
            <person name="Nagase T."/>
            <person name="Ishikawa K."/>
            <person name="Suyama M."/>
            <person name="Kikuno R."/>
            <person name="Hirosawa M."/>
            <person name="Miyajima N."/>
            <person name="Tanaka A."/>
            <person name="Kotani H."/>
            <person name="Nomura N."/>
            <person name="Ohara O."/>
        </authorList>
    </citation>
    <scope>NUCLEOTIDE SEQUENCE [LARGE SCALE MRNA] (ISOFORM 1)</scope>
    <source>
        <tissue>Brain</tissue>
    </source>
</reference>
<reference key="5">
    <citation type="journal article" date="2002" name="DNA Res.">
        <title>Construction of expression-ready cDNA clones for KIAA genes: manual curation of 330 KIAA cDNA clones.</title>
        <authorList>
            <person name="Nakajima D."/>
            <person name="Okazaki N."/>
            <person name="Yamakawa H."/>
            <person name="Kikuno R."/>
            <person name="Ohara O."/>
            <person name="Nagase T."/>
        </authorList>
    </citation>
    <scope>SEQUENCE REVISION</scope>
</reference>
<reference key="6">
    <citation type="journal article" date="2004" name="Nat. Genet.">
        <title>Complete sequencing and characterization of 21,243 full-length human cDNAs.</title>
        <authorList>
            <person name="Ota T."/>
            <person name="Suzuki Y."/>
            <person name="Nishikawa T."/>
            <person name="Otsuki T."/>
            <person name="Sugiyama T."/>
            <person name="Irie R."/>
            <person name="Wakamatsu A."/>
            <person name="Hayashi K."/>
            <person name="Sato H."/>
            <person name="Nagai K."/>
            <person name="Kimura K."/>
            <person name="Makita H."/>
            <person name="Sekine M."/>
            <person name="Obayashi M."/>
            <person name="Nishi T."/>
            <person name="Shibahara T."/>
            <person name="Tanaka T."/>
            <person name="Ishii S."/>
            <person name="Yamamoto J."/>
            <person name="Saito K."/>
            <person name="Kawai Y."/>
            <person name="Isono Y."/>
            <person name="Nakamura Y."/>
            <person name="Nagahari K."/>
            <person name="Murakami K."/>
            <person name="Yasuda T."/>
            <person name="Iwayanagi T."/>
            <person name="Wagatsuma M."/>
            <person name="Shiratori A."/>
            <person name="Sudo H."/>
            <person name="Hosoiri T."/>
            <person name="Kaku Y."/>
            <person name="Kodaira H."/>
            <person name="Kondo H."/>
            <person name="Sugawara M."/>
            <person name="Takahashi M."/>
            <person name="Kanda K."/>
            <person name="Yokoi T."/>
            <person name="Furuya T."/>
            <person name="Kikkawa E."/>
            <person name="Omura Y."/>
            <person name="Abe K."/>
            <person name="Kamihara K."/>
            <person name="Katsuta N."/>
            <person name="Sato K."/>
            <person name="Tanikawa M."/>
            <person name="Yamazaki M."/>
            <person name="Ninomiya K."/>
            <person name="Ishibashi T."/>
            <person name="Yamashita H."/>
            <person name="Murakawa K."/>
            <person name="Fujimori K."/>
            <person name="Tanai H."/>
            <person name="Kimata M."/>
            <person name="Watanabe M."/>
            <person name="Hiraoka S."/>
            <person name="Chiba Y."/>
            <person name="Ishida S."/>
            <person name="Ono Y."/>
            <person name="Takiguchi S."/>
            <person name="Watanabe S."/>
            <person name="Yosida M."/>
            <person name="Hotuta T."/>
            <person name="Kusano J."/>
            <person name="Kanehori K."/>
            <person name="Takahashi-Fujii A."/>
            <person name="Hara H."/>
            <person name="Tanase T.-O."/>
            <person name="Nomura Y."/>
            <person name="Togiya S."/>
            <person name="Komai F."/>
            <person name="Hara R."/>
            <person name="Takeuchi K."/>
            <person name="Arita M."/>
            <person name="Imose N."/>
            <person name="Musashino K."/>
            <person name="Yuuki H."/>
            <person name="Oshima A."/>
            <person name="Sasaki N."/>
            <person name="Aotsuka S."/>
            <person name="Yoshikawa Y."/>
            <person name="Matsunawa H."/>
            <person name="Ichihara T."/>
            <person name="Shiohata N."/>
            <person name="Sano S."/>
            <person name="Moriya S."/>
            <person name="Momiyama H."/>
            <person name="Satoh N."/>
            <person name="Takami S."/>
            <person name="Terashima Y."/>
            <person name="Suzuki O."/>
            <person name="Nakagawa S."/>
            <person name="Senoh A."/>
            <person name="Mizoguchi H."/>
            <person name="Goto Y."/>
            <person name="Shimizu F."/>
            <person name="Wakebe H."/>
            <person name="Hishigaki H."/>
            <person name="Watanabe T."/>
            <person name="Sugiyama A."/>
            <person name="Takemoto M."/>
            <person name="Kawakami B."/>
            <person name="Yamazaki M."/>
            <person name="Watanabe K."/>
            <person name="Kumagai A."/>
            <person name="Itakura S."/>
            <person name="Fukuzumi Y."/>
            <person name="Fujimori Y."/>
            <person name="Komiyama M."/>
            <person name="Tashiro H."/>
            <person name="Tanigami A."/>
            <person name="Fujiwara T."/>
            <person name="Ono T."/>
            <person name="Yamada K."/>
            <person name="Fujii Y."/>
            <person name="Ozaki K."/>
            <person name="Hirao M."/>
            <person name="Ohmori Y."/>
            <person name="Kawabata A."/>
            <person name="Hikiji T."/>
            <person name="Kobatake N."/>
            <person name="Inagaki H."/>
            <person name="Ikema Y."/>
            <person name="Okamoto S."/>
            <person name="Okitani R."/>
            <person name="Kawakami T."/>
            <person name="Noguchi S."/>
            <person name="Itoh T."/>
            <person name="Shigeta K."/>
            <person name="Senba T."/>
            <person name="Matsumura K."/>
            <person name="Nakajima Y."/>
            <person name="Mizuno T."/>
            <person name="Morinaga M."/>
            <person name="Sasaki M."/>
            <person name="Togashi T."/>
            <person name="Oyama M."/>
            <person name="Hata H."/>
            <person name="Watanabe M."/>
            <person name="Komatsu T."/>
            <person name="Mizushima-Sugano J."/>
            <person name="Satoh T."/>
            <person name="Shirai Y."/>
            <person name="Takahashi Y."/>
            <person name="Nakagawa K."/>
            <person name="Okumura K."/>
            <person name="Nagase T."/>
            <person name="Nomura N."/>
            <person name="Kikuchi H."/>
            <person name="Masuho Y."/>
            <person name="Yamashita R."/>
            <person name="Nakai K."/>
            <person name="Yada T."/>
            <person name="Nakamura Y."/>
            <person name="Ohara O."/>
            <person name="Isogai T."/>
            <person name="Sugano S."/>
        </authorList>
    </citation>
    <scope>NUCLEOTIDE SEQUENCE [LARGE SCALE MRNA] (ISOFORM 3)</scope>
    <source>
        <tissue>Brain</tissue>
    </source>
</reference>
<reference key="7">
    <citation type="journal article" date="2003" name="Nature">
        <title>The DNA sequence and analysis of human chromosome 14.</title>
        <authorList>
            <person name="Heilig R."/>
            <person name="Eckenberg R."/>
            <person name="Petit J.-L."/>
            <person name="Fonknechten N."/>
            <person name="Da Silva C."/>
            <person name="Cattolico L."/>
            <person name="Levy M."/>
            <person name="Barbe V."/>
            <person name="De Berardinis V."/>
            <person name="Ureta-Vidal A."/>
            <person name="Pelletier E."/>
            <person name="Vico V."/>
            <person name="Anthouard V."/>
            <person name="Rowen L."/>
            <person name="Madan A."/>
            <person name="Qin S."/>
            <person name="Sun H."/>
            <person name="Du H."/>
            <person name="Pepin K."/>
            <person name="Artiguenave F."/>
            <person name="Robert C."/>
            <person name="Cruaud C."/>
            <person name="Bruels T."/>
            <person name="Jaillon O."/>
            <person name="Friedlander L."/>
            <person name="Samson G."/>
            <person name="Brottier P."/>
            <person name="Cure S."/>
            <person name="Segurens B."/>
            <person name="Aniere F."/>
            <person name="Samain S."/>
            <person name="Crespeau H."/>
            <person name="Abbasi N."/>
            <person name="Aiach N."/>
            <person name="Boscus D."/>
            <person name="Dickhoff R."/>
            <person name="Dors M."/>
            <person name="Dubois I."/>
            <person name="Friedman C."/>
            <person name="Gouyvenoux M."/>
            <person name="James R."/>
            <person name="Madan A."/>
            <person name="Mairey-Estrada B."/>
            <person name="Mangenot S."/>
            <person name="Martins N."/>
            <person name="Menard M."/>
            <person name="Oztas S."/>
            <person name="Ratcliffe A."/>
            <person name="Shaffer T."/>
            <person name="Trask B."/>
            <person name="Vacherie B."/>
            <person name="Bellemere C."/>
            <person name="Belser C."/>
            <person name="Besnard-Gonnet M."/>
            <person name="Bartol-Mavel D."/>
            <person name="Boutard M."/>
            <person name="Briez-Silla S."/>
            <person name="Combette S."/>
            <person name="Dufosse-Laurent V."/>
            <person name="Ferron C."/>
            <person name="Lechaplais C."/>
            <person name="Louesse C."/>
            <person name="Muselet D."/>
            <person name="Magdelenat G."/>
            <person name="Pateau E."/>
            <person name="Petit E."/>
            <person name="Sirvain-Trukniewicz P."/>
            <person name="Trybou A."/>
            <person name="Vega-Czarny N."/>
            <person name="Bataille E."/>
            <person name="Bluet E."/>
            <person name="Bordelais I."/>
            <person name="Dubois M."/>
            <person name="Dumont C."/>
            <person name="Guerin T."/>
            <person name="Haffray S."/>
            <person name="Hammadi R."/>
            <person name="Muanga J."/>
            <person name="Pellouin V."/>
            <person name="Robert D."/>
            <person name="Wunderle E."/>
            <person name="Gauguet G."/>
            <person name="Roy A."/>
            <person name="Sainte-Marthe L."/>
            <person name="Verdier J."/>
            <person name="Verdier-Discala C."/>
            <person name="Hillier L.W."/>
            <person name="Fulton L."/>
            <person name="McPherson J."/>
            <person name="Matsuda F."/>
            <person name="Wilson R."/>
            <person name="Scarpelli C."/>
            <person name="Gyapay G."/>
            <person name="Wincker P."/>
            <person name="Saurin W."/>
            <person name="Quetier F."/>
            <person name="Waterston R."/>
            <person name="Hood L."/>
            <person name="Weissenbach J."/>
        </authorList>
    </citation>
    <scope>NUCLEOTIDE SEQUENCE [LARGE SCALE GENOMIC DNA]</scope>
</reference>
<reference key="8">
    <citation type="submission" date="2005-07" db="EMBL/GenBank/DDBJ databases">
        <authorList>
            <person name="Mural R.J."/>
            <person name="Istrail S."/>
            <person name="Sutton G.G."/>
            <person name="Florea L."/>
            <person name="Halpern A.L."/>
            <person name="Mobarry C.M."/>
            <person name="Lippert R."/>
            <person name="Walenz B."/>
            <person name="Shatkay H."/>
            <person name="Dew I."/>
            <person name="Miller J.R."/>
            <person name="Flanigan M.J."/>
            <person name="Edwards N.J."/>
            <person name="Bolanos R."/>
            <person name="Fasulo D."/>
            <person name="Halldorsson B.V."/>
            <person name="Hannenhalli S."/>
            <person name="Turner R."/>
            <person name="Yooseph S."/>
            <person name="Lu F."/>
            <person name="Nusskern D.R."/>
            <person name="Shue B.C."/>
            <person name="Zheng X.H."/>
            <person name="Zhong F."/>
            <person name="Delcher A.L."/>
            <person name="Huson D.H."/>
            <person name="Kravitz S.A."/>
            <person name="Mouchard L."/>
            <person name="Reinert K."/>
            <person name="Remington K.A."/>
            <person name="Clark A.G."/>
            <person name="Waterman M.S."/>
            <person name="Eichler E.E."/>
            <person name="Adams M.D."/>
            <person name="Hunkapiller M.W."/>
            <person name="Myers E.W."/>
            <person name="Venter J.C."/>
        </authorList>
    </citation>
    <scope>NUCLEOTIDE SEQUENCE [LARGE SCALE GENOMIC DNA]</scope>
</reference>
<reference key="9">
    <citation type="journal article" date="2004" name="Genome Res.">
        <title>The status, quality, and expansion of the NIH full-length cDNA project: the Mammalian Gene Collection (MGC).</title>
        <authorList>
            <consortium name="The MGC Project Team"/>
        </authorList>
    </citation>
    <scope>NUCLEOTIDE SEQUENCE [LARGE SCALE MRNA] (ISOFORM 1)</scope>
</reference>
<reference key="10">
    <citation type="journal article" date="1999" name="Proc. Natl. Acad. Sci. U.S.A.">
        <title>Interaction of 5-lipoxygenase with cellular proteins.</title>
        <authorList>
            <person name="Provost P."/>
            <person name="Samuelsson B."/>
            <person name="Radmark O."/>
        </authorList>
    </citation>
    <scope>NUCLEOTIDE SEQUENCE [MRNA] OF 1248-1922 (ISOFORM 1)</scope>
    <source>
        <tissue>Lung</tissue>
    </source>
</reference>
<reference key="11">
    <citation type="journal article" date="2004" name="Cell">
        <title>Single processing center models for human Dicer and bacterial RNase III.</title>
        <authorList>
            <person name="Zhang H."/>
            <person name="Kolb F.A."/>
            <person name="Jaskiewicz L."/>
            <person name="Westhof E."/>
            <person name="Filipowicz W."/>
        </authorList>
    </citation>
    <scope>FUNCTION</scope>
    <scope>CATALYTIC ACTIVITY</scope>
    <scope>MUTAGENESIS OF GLU-1313; ASP-1320; GLU-1340; GLU-1444; GLN-1702; ASP-1709; PRO-1729 AND GLU-1813</scope>
</reference>
<reference key="12">
    <citation type="journal article" date="2004" name="EMBO Rep.">
        <title>Characterization of the interactions between mammalian PAZ PIWI domain proteins and Dicer.</title>
        <authorList>
            <person name="Tahbaz N."/>
            <person name="Kolb F.A."/>
            <person name="Zhang H."/>
            <person name="Jaronczyk K."/>
            <person name="Filipowicz W."/>
            <person name="Hobman T.C."/>
        </authorList>
    </citation>
    <scope>INTERACTION WITH PIWIL1</scope>
</reference>
<reference key="13">
    <citation type="journal article" date="2005" name="Cell">
        <title>Human RISC couples microRNA biogenesis and posttranscriptional gene silencing.</title>
        <authorList>
            <person name="Gregory R.I."/>
            <person name="Chendrimada T.P."/>
            <person name="Cooch N."/>
            <person name="Shiekhattar R."/>
        </authorList>
    </citation>
    <scope>FUNCTION</scope>
    <scope>INTERACTION WITH AGO2 AND TARBP2</scope>
</reference>
<reference key="14">
    <citation type="journal article" date="2005" name="Curr. Biol.">
        <title>Identification of novel argonaute-associated proteins.</title>
        <authorList>
            <person name="Meister G."/>
            <person name="Landthaler M."/>
            <person name="Peters L."/>
            <person name="Chen P.Y."/>
            <person name="Urlaub H."/>
            <person name="Luehrmann R."/>
            <person name="Tuschl T."/>
        </authorList>
    </citation>
    <scope>IDENTIFICATION BY MASS SPECTROMETRY</scope>
    <scope>FUNCTION</scope>
    <scope>INTERACTION WITH AGO1 AND AGO2</scope>
</reference>
<reference key="15">
    <citation type="journal article" date="2005" name="EMBO Rep.">
        <title>TRBP, a regulator of cellular PKR and HIV-1 virus expression, interacts with Dicer and functions in RNA silencing.</title>
        <authorList>
            <person name="Haase A.D."/>
            <person name="Jaskiewicz L."/>
            <person name="Zhang H."/>
            <person name="Laine S."/>
            <person name="Sack R."/>
            <person name="Gatignol A."/>
            <person name="Filipowicz W."/>
        </authorList>
    </citation>
    <scope>FUNCTION</scope>
    <scope>INTERACTION WITH TARBP2</scope>
</reference>
<reference key="16">
    <citation type="journal article" date="2005" name="Genes Dev.">
        <title>A human, ATP-independent, RISC assembly machine fueled by pre-miRNA.</title>
        <authorList>
            <person name="Maniataki E."/>
            <person name="Mourelatos Z."/>
        </authorList>
    </citation>
    <scope>FUNCTION</scope>
    <scope>INTERACTION WITH AGO2</scope>
</reference>
<reference key="17">
    <citation type="journal article" date="2005" name="Nature">
        <title>TRBP recruits the Dicer complex to Ago2 for microRNA processing and gene silencing.</title>
        <authorList>
            <person name="Chendrimada T.P."/>
            <person name="Gregory R.I."/>
            <person name="Kumaraswamy E."/>
            <person name="Norman J."/>
            <person name="Cooch N."/>
            <person name="Nishikura K."/>
            <person name="Shiekhattar R."/>
        </authorList>
    </citation>
    <scope>IDENTIFICATION BY MASS SPECTROMETRY</scope>
    <scope>FUNCTION</scope>
    <scope>INTERACTION WITH AGO2 AND TARBP2</scope>
</reference>
<reference key="18">
    <citation type="journal article" date="2006" name="EMBO J.">
        <title>The role of PACT in the RNA silencing pathway.</title>
        <authorList>
            <person name="Lee Y."/>
            <person name="Hur I."/>
            <person name="Park S.-Y."/>
            <person name="Kim Y.-K."/>
            <person name="Suh M.R."/>
            <person name="Kim V.N."/>
        </authorList>
    </citation>
    <scope>FUNCTION</scope>
    <scope>INTERACTION WITH PRKRA AND TARBP2</scope>
    <scope>SUBCELLULAR LOCATION</scope>
</reference>
<reference key="19">
    <citation type="journal article" date="2007" name="J. Biol. Chem.">
        <title>Human TRBP and PACT directly interact with each other and associate with dicer to facilitate the production of small interfering RNA.</title>
        <authorList>
            <person name="Kok K.H."/>
            <person name="Ng M.-H."/>
            <person name="Ching Y.-P."/>
            <person name="Jin D.-Y."/>
        </authorList>
    </citation>
    <scope>FUNCTION</scope>
    <scope>INTERACTION WITH PRKRA AND TARBP2</scope>
</reference>
<reference key="20">
    <citation type="journal article" date="2007" name="Mol. Cell">
        <title>RNA helicase A interacts with RISC in human cells and functions in RISC loading.</title>
        <authorList>
            <person name="Robb G.B."/>
            <person name="Rana T.M."/>
        </authorList>
    </citation>
    <scope>INTERACTION WITH DHX9</scope>
</reference>
<reference key="21">
    <citation type="journal article" date="2007" name="Nature">
        <title>MicroRNA silencing through RISC recruitment of eIF6.</title>
        <authorList>
            <person name="Chendrimada T.P."/>
            <person name="Finn K.J."/>
            <person name="Ji X."/>
            <person name="Baillat D."/>
            <person name="Gregory R.I."/>
            <person name="Liebhaber S.A."/>
            <person name="Pasquinelli A.E."/>
            <person name="Shiekhattar R."/>
        </authorList>
    </citation>
    <scope>IDENTIFICATION BY MASS SPECTROMETRY</scope>
    <scope>INTERACTION WITH AGO2; EIF6; MOV10; RPL7A AND TARBP2</scope>
    <scope>ASSOCIATION WITH THE 60S RIBOSOME</scope>
</reference>
<reference key="22">
    <citation type="journal article" date="2008" name="Nature">
        <title>Prolyl 4-hydroxylation regulates Argonaute 2 stability.</title>
        <authorList>
            <person name="Qi H.H."/>
            <person name="Ongusaha P.P."/>
            <person name="Myllyharju J."/>
            <person name="Cheng D."/>
            <person name="Pakkanen O."/>
            <person name="Shi Y."/>
            <person name="Lee S.W."/>
            <person name="Peng J."/>
            <person name="Shi Y."/>
        </authorList>
    </citation>
    <scope>IDENTIFICATION BY MASS SPECTROMETRY</scope>
    <scope>INTERACTION WITH AGO2</scope>
</reference>
<reference key="23">
    <citation type="journal article" date="2008" name="Proc. Natl. Acad. Sci. U.S.A.">
        <title>A quantitative atlas of mitotic phosphorylation.</title>
        <authorList>
            <person name="Dephoure N."/>
            <person name="Zhou C."/>
            <person name="Villen J."/>
            <person name="Beausoleil S.A."/>
            <person name="Bakalarski C.E."/>
            <person name="Elledge S.J."/>
            <person name="Gygi S.P."/>
        </authorList>
    </citation>
    <scope>PHOSPHORYLATION [LARGE SCALE ANALYSIS] AT SER-1016</scope>
    <scope>IDENTIFICATION BY MASS SPECTROMETRY [LARGE SCALE ANALYSIS]</scope>
    <source>
        <tissue>Cervix carcinoma</tissue>
    </source>
</reference>
<reference key="24">
    <citation type="journal article" date="2008" name="Proc. Natl. Acad. Sci. U.S.A.">
        <title>In vitro reconstitution of the human RISC-loading complex.</title>
        <authorList>
            <person name="MacRae I.J."/>
            <person name="Ma E."/>
            <person name="Zhou M."/>
            <person name="Robinson C.V."/>
            <person name="Doudna J.A."/>
        </authorList>
    </citation>
    <scope>IDENTIFICATION BY MASS SPECTROMETRY</scope>
    <scope>FUNCTION</scope>
    <scope>INTERACTION WITH AGO2 AND TARBP2</scope>
</reference>
<reference key="25">
    <citation type="journal article" date="2009" name="Anal. Chem.">
        <title>Lys-N and trypsin cover complementary parts of the phosphoproteome in a refined SCX-based approach.</title>
        <authorList>
            <person name="Gauci S."/>
            <person name="Helbig A.O."/>
            <person name="Slijper M."/>
            <person name="Krijgsveld J."/>
            <person name="Heck A.J."/>
            <person name="Mohammed S."/>
        </authorList>
    </citation>
    <scope>IDENTIFICATION BY MASS SPECTROMETRY [LARGE SCALE ANALYSIS]</scope>
</reference>
<reference key="26">
    <citation type="journal article" date="2009" name="Biochim. Biophys. Acta">
        <title>Human Dicer C-terminus functions as a 5-lipoxygenase binding domain.</title>
        <authorList>
            <person name="Dincbas-Renqvist V."/>
            <person name="Pepin G."/>
            <person name="Rakonjac M."/>
            <person name="Plante I."/>
            <person name="Ouellet D.L."/>
            <person name="Hermansson A."/>
            <person name="Goulet I."/>
            <person name="Doucet J."/>
            <person name="Samuelsson B."/>
            <person name="Raadmark O."/>
            <person name="Provost P."/>
        </authorList>
    </citation>
    <scope>INTERACTION WITH ALOX5</scope>
    <scope>SUBCELLULAR LOCATION</scope>
</reference>
<reference key="27">
    <citation type="journal article" date="2009" name="Nat. Genet.">
        <title>A TARBP2 mutation in human cancer impairs microRNA processing and DICER1 function.</title>
        <authorList>
            <person name="Melo S.A."/>
            <person name="Ropero S."/>
            <person name="Moutinho C."/>
            <person name="Aaltonen L.A."/>
            <person name="Yamamoto H."/>
            <person name="Calin G.A."/>
            <person name="Rossi S."/>
            <person name="Fernandez A.F."/>
            <person name="Carneiro F."/>
            <person name="Oliveira C."/>
            <person name="Ferreira B."/>
            <person name="Liu C.-G."/>
            <person name="Villanueva A."/>
            <person name="Capella G."/>
            <person name="Schwartz S. Jr."/>
            <person name="Shiekhattar R."/>
            <person name="Esteller M."/>
        </authorList>
    </citation>
    <scope>RETRACTED PAPER</scope>
</reference>
<reference key="28">
    <citation type="journal article" date="2016" name="Nat. Genet.">
        <title>Retraction: A TARBP2 mutation in human cancer impairs microRNA processing and DICER1 function.</title>
        <authorList>
            <person name="Melo S.A."/>
            <person name="Ropero S."/>
            <person name="Moutinho C."/>
            <person name="Aaltonen L.A."/>
            <person name="Yamamoto H."/>
            <person name="Calin G.A."/>
            <person name="Rossi S."/>
            <person name="Fernandez A.F."/>
            <person name="Carneiro F."/>
            <person name="Oliveira C."/>
            <person name="Ferreira B."/>
            <person name="Liu C.-G."/>
            <person name="Villanueva A."/>
            <person name="Capella G."/>
            <person name="Schwartz S. Jr."/>
            <person name="Shiekhattar R."/>
            <person name="Esteller M."/>
        </authorList>
    </citation>
    <scope>RETRACTION NOTICE OF PUBMED:19219043</scope>
</reference>
<reference key="29">
    <citation type="journal article" date="2011" name="BMC Syst. Biol.">
        <title>Initial characterization of the human central proteome.</title>
        <authorList>
            <person name="Burkard T.R."/>
            <person name="Planyavsky M."/>
            <person name="Kaupe I."/>
            <person name="Breitwieser F.P."/>
            <person name="Buerckstuemmer T."/>
            <person name="Bennett K.L."/>
            <person name="Superti-Furga G."/>
            <person name="Colinge J."/>
        </authorList>
    </citation>
    <scope>IDENTIFICATION BY MASS SPECTROMETRY [LARGE SCALE ANALYSIS]</scope>
</reference>
<reference key="30">
    <citation type="journal article" date="2011" name="Hum. Mutat.">
        <title>Extending the phenotypes associated with DICER1 mutations.</title>
        <authorList>
            <person name="Foulkes W.D."/>
            <person name="Bahubeshi A."/>
            <person name="Hamel N."/>
            <person name="Pasini B."/>
            <person name="Asioli S."/>
            <person name="Baynam G."/>
            <person name="Choong C.S."/>
            <person name="Charles A."/>
            <person name="Frieder R.P."/>
            <person name="Dishop M.K."/>
            <person name="Graf N."/>
            <person name="Ekim M."/>
            <person name="Bouron-Dal Soglio D."/>
            <person name="Arseneau J."/>
            <person name="Young R.H."/>
            <person name="Sabbaghian N."/>
            <person name="Srivastava A."/>
            <person name="Tischkowitz M.D."/>
            <person name="Priest J.R."/>
        </authorList>
    </citation>
    <scope>INVOLVEMENT IN RMSE2</scope>
</reference>
<reference key="31">
    <citation type="journal article" date="2011" name="Sci. Signal.">
        <title>System-wide temporal characterization of the proteome and phosphoproteome of human embryonic stem cell differentiation.</title>
        <authorList>
            <person name="Rigbolt K.T."/>
            <person name="Prokhorova T.A."/>
            <person name="Akimov V."/>
            <person name="Henningsen J."/>
            <person name="Johansen P.T."/>
            <person name="Kratchmarova I."/>
            <person name="Kassem M."/>
            <person name="Mann M."/>
            <person name="Olsen J.V."/>
            <person name="Blagoev B."/>
        </authorList>
    </citation>
    <scope>PHOSPHORYLATION [LARGE SCALE ANALYSIS] AT SER-413 AND SER-415</scope>
    <scope>IDENTIFICATION BY MASS SPECTROMETRY [LARGE SCALE ANALYSIS]</scope>
</reference>
<reference key="32">
    <citation type="journal article" date="2011" name="J. Virol.">
        <title>Ebolavirus proteins suppress the effects of small interfering RNA by direct interaction with the mammalian RNA interference pathway.</title>
        <authorList>
            <person name="Fabozzi G."/>
            <person name="Nabel C.S."/>
            <person name="Dolan M.A."/>
            <person name="Sullivan N.J."/>
        </authorList>
    </citation>
    <scope>INTERACTION WITH EBOLAVIRUS VP30 (MICROBIAL INFECTION)</scope>
    <scope>INTERACTION WITH EBOLAVIRUS VP35 (MICROBIAL INFECTION)</scope>
</reference>
<reference key="33">
    <citation type="journal article" date="2012" name="Cell">
        <title>Human RNA methyltransferase BCDIN3D regulates microRNA processing.</title>
        <authorList>
            <person name="Xhemalce B."/>
            <person name="Robson S.C."/>
            <person name="Kouzarides T."/>
        </authorList>
    </citation>
    <scope>INTERACTION WITH BCDIN3D</scope>
</reference>
<reference key="34">
    <citation type="journal article" date="2012" name="N. Engl. J. Med.">
        <title>Recurrent somatic DICER1 mutations in nonepithelial ovarian cancers.</title>
        <authorList>
            <person name="Heravi-Moussavi A."/>
            <person name="Anglesio M.S."/>
            <person name="Cheng S.W."/>
            <person name="Senz J."/>
            <person name="Yang W."/>
            <person name="Prentice L."/>
            <person name="Fejes A.P."/>
            <person name="Chow C."/>
            <person name="Tone A."/>
            <person name="Kalloger S.E."/>
            <person name="Hamel N."/>
            <person name="Roth A."/>
            <person name="Ha G."/>
            <person name="Wan A.N."/>
            <person name="Maines-Bandiera S."/>
            <person name="Salamanca C."/>
            <person name="Pasini B."/>
            <person name="Clarke B.A."/>
            <person name="Lee A.F."/>
            <person name="Lee C.H."/>
            <person name="Zhao C."/>
            <person name="Young R.H."/>
            <person name="Aparicio S.A."/>
            <person name="Sorensen P.H."/>
            <person name="Woo M.M."/>
            <person name="Boyd N."/>
            <person name="Jones S.J."/>
            <person name="Hirst M."/>
            <person name="Marra M.A."/>
            <person name="Gilks B."/>
            <person name="Shah S.P."/>
            <person name="Foulkes W.D."/>
            <person name="Morin G.B."/>
            <person name="Huntsman D.G."/>
        </authorList>
    </citation>
    <scope>INVOLVEMENT IN NON-EPITHELIAL OVARIAN TUMORS</scope>
    <scope>VARIANTS LYS-1705; ASN-1709; GLU-1709; GLY-1709; HIS-1810; TYR-1810; ASN-1810; GLN-1813; GLY-1813 AND LYS-1813</scope>
    <scope>CHARACTERIZATION OF VARIANTS LYS-1705; ASN-1709 AND GLU-1709</scope>
</reference>
<reference key="35">
    <citation type="journal article" date="2013" name="J. Proteome Res.">
        <title>Toward a comprehensive characterization of a human cancer cell phosphoproteome.</title>
        <authorList>
            <person name="Zhou H."/>
            <person name="Di Palma S."/>
            <person name="Preisinger C."/>
            <person name="Peng M."/>
            <person name="Polat A.N."/>
            <person name="Heck A.J."/>
            <person name="Mohammed S."/>
        </authorList>
    </citation>
    <scope>PHOSPHORYLATION [LARGE SCALE ANALYSIS] AT SER-1160; SER-1460; SER-1470 AND SER-1868</scope>
    <scope>IDENTIFICATION BY MASS SPECTROMETRY [LARGE SCALE ANALYSIS]</scope>
    <source>
        <tissue>Cervix carcinoma</tissue>
        <tissue>Erythroleukemia</tissue>
    </source>
</reference>
<reference key="36">
    <citation type="journal article" date="2014" name="J. Proteomics">
        <title>An enzyme assisted RP-RPLC approach for in-depth analysis of human liver phosphoproteome.</title>
        <authorList>
            <person name="Bian Y."/>
            <person name="Song C."/>
            <person name="Cheng K."/>
            <person name="Dong M."/>
            <person name="Wang F."/>
            <person name="Huang J."/>
            <person name="Sun D."/>
            <person name="Wang L."/>
            <person name="Ye M."/>
            <person name="Zou H."/>
        </authorList>
    </citation>
    <scope>IDENTIFICATION BY MASS SPECTROMETRY [LARGE SCALE ANALYSIS]</scope>
    <source>
        <tissue>Liver</tissue>
    </source>
</reference>
<reference evidence="39" key="37">
    <citation type="journal article" date="2007" name="J. Mol. Biol.">
        <title>Homodimeric structure and double-stranded RNA cleavage activity of the C-terminal RNase III domain of human dicer.</title>
        <authorList>
            <person name="Takeshita D."/>
            <person name="Zenno S."/>
            <person name="Lee W.C."/>
            <person name="Nagata K."/>
            <person name="Saigo K."/>
            <person name="Tanokura M."/>
        </authorList>
    </citation>
    <scope>X-RAY CRYSTALLOGRAPHY (2.0 ANGSTROMS) OF 1660-1852 IN COMPLEX WITH MAGNESIUM</scope>
    <scope>CATALYTIC ACTIVITY</scope>
    <scope>COFACTOR</scope>
    <scope>SUBUNIT</scope>
</reference>
<reference key="38">
    <citation type="journal article" date="2009" name="Science">
        <title>DICER1 mutations in familial pleuropulmonary blastoma.</title>
        <authorList>
            <person name="Hill D.A."/>
            <person name="Ivanovich J."/>
            <person name="Priest J.R."/>
            <person name="Gurnett C.A."/>
            <person name="Dehner L.P."/>
            <person name="Desruisseau D."/>
            <person name="Jarzembowski J.A."/>
            <person name="Wikenheiser-Brokamp K.A."/>
            <person name="Suarez B.K."/>
            <person name="Whelan A.J."/>
            <person name="Williams G."/>
            <person name="Bracamontes D."/>
            <person name="Messinger Y."/>
            <person name="Goodfellow P.J."/>
        </authorList>
    </citation>
    <scope>VARIANT PPB ARG-1583</scope>
</reference>
<reference key="39">
    <citation type="journal article" date="2011" name="JAMA">
        <title>DICER1 mutations in familial multinodular goiter with and without ovarian Sertoli-Leydig cell tumors.</title>
        <authorList>
            <person name="Rio Frio T."/>
            <person name="Bahubeshi A."/>
            <person name="Kanellopoulou C."/>
            <person name="Hamel N."/>
            <person name="Niedziela M."/>
            <person name="Sabbaghian N."/>
            <person name="Pouchet C."/>
            <person name="Gilbert L."/>
            <person name="O'Brien P.K."/>
            <person name="Serfas K."/>
            <person name="Broderick P."/>
            <person name="Houlston R.S."/>
            <person name="Lesueur F."/>
            <person name="Bonora E."/>
            <person name="Muljo S."/>
            <person name="Schimke R.N."/>
            <person name="Bouron-Dal Soglio D."/>
            <person name="Arseneau J."/>
            <person name="Schultz K.A."/>
            <person name="Priest J.R."/>
            <person name="Nguyen V.H."/>
            <person name="Harach H.R."/>
            <person name="Livingston D.M."/>
            <person name="Foulkes W.D."/>
            <person name="Tischkowitz M."/>
        </authorList>
    </citation>
    <scope>VARIANT MNG1 PHE-839</scope>
</reference>
<reference key="40">
    <citation type="journal article" date="2014" name="J. Med. Genet.">
        <title>Expanding the phenotype of mutations in DICER1: mosaic missense mutations in the RNase IIIb domain of DICER1 cause GLOW syndrome.</title>
        <authorList>
            <person name="Klein S."/>
            <person name="Lee H."/>
            <person name="Ghahremani S."/>
            <person name="Kempert P."/>
            <person name="Ischander M."/>
            <person name="Teitell M.A."/>
            <person name="Nelson S.F."/>
            <person name="Martinez-Agosto J.A."/>
        </authorList>
    </citation>
    <scope>VARIANTS LEU-435 AND GLY-1898</scope>
    <scope>VARIANTS GLOW TYR-1709 AND VAL-1713</scope>
    <scope>INVOLVEMENT IN GLOW</scope>
</reference>
<reference key="41">
    <citation type="journal article" date="2015" name="F1000Research">
        <title>Temporal order of RNase IIIb and loss-of-function mutations during development determines phenotype in pleuropulmonary blastoma / DICER1 syndrome: a unique variant of the two-hit tumor suppression model.</title>
        <authorList>
            <person name="Brenneman M."/>
            <person name="Field A."/>
            <person name="Yang J."/>
            <person name="Williams G."/>
            <person name="Doros L."/>
            <person name="Rossi C."/>
            <person name="Schultz K.A."/>
            <person name="Rosenberg A."/>
            <person name="Ivanovich J."/>
            <person name="Turner J."/>
            <person name="Gordish-Dressman H."/>
            <person name="Stewart D."/>
            <person name="Yu W."/>
            <person name="Harris A."/>
            <person name="Schoettler P."/>
            <person name="Goodfellow P."/>
            <person name="Dehner L."/>
            <person name="Messinger Y."/>
            <person name="Hill D.A."/>
        </authorList>
    </citation>
    <scope>VARIANTS PPB LYS-1705; ASN-1709; ARG-1809; TYR-1810 AND GLN-1813</scope>
</reference>
<protein>
    <recommendedName>
        <fullName>Endoribonuclease Dicer</fullName>
        <ecNumber>3.1.26.3</ecNumber>
    </recommendedName>
    <alternativeName>
        <fullName>Helicase with RNase motif</fullName>
        <shortName>Helicase MOI</shortName>
    </alternativeName>
</protein>
<keyword id="KW-0002">3D-structure</keyword>
<keyword id="KW-0025">Alternative splicing</keyword>
<keyword id="KW-0067">ATP-binding</keyword>
<keyword id="KW-0963">Cytoplasm</keyword>
<keyword id="KW-0225">Disease variant</keyword>
<keyword id="KW-0255">Endonuclease</keyword>
<keyword id="KW-0347">Helicase</keyword>
<keyword id="KW-0945">Host-virus interaction</keyword>
<keyword id="KW-0378">Hydrolase</keyword>
<keyword id="KW-0460">Magnesium</keyword>
<keyword id="KW-0464">Manganese</keyword>
<keyword id="KW-0479">Metal-binding</keyword>
<keyword id="KW-0540">Nuclease</keyword>
<keyword id="KW-0547">Nucleotide-binding</keyword>
<keyword id="KW-0597">Phosphoprotein</keyword>
<keyword id="KW-1267">Proteomics identification</keyword>
<keyword id="KW-1185">Reference proteome</keyword>
<keyword id="KW-0677">Repeat</keyword>
<keyword id="KW-0694">RNA-binding</keyword>
<keyword id="KW-0943">RNA-mediated gene silencing</keyword>
<dbReference type="EC" id="3.1.26.3"/>
<dbReference type="EMBL" id="AB028449">
    <property type="protein sequence ID" value="BAA78691.1"/>
    <property type="molecule type" value="mRNA"/>
</dbReference>
<dbReference type="EMBL" id="HM595745">
    <property type="protein sequence ID" value="ADK25182.1"/>
    <property type="molecule type" value="mRNA"/>
</dbReference>
<dbReference type="EMBL" id="AJ132261">
    <property type="protein sequence ID" value="CAB38857.2"/>
    <property type="status" value="ALT_INIT"/>
    <property type="molecule type" value="mRNA"/>
</dbReference>
<dbReference type="EMBL" id="AB023145">
    <property type="protein sequence ID" value="BAA76772.2"/>
    <property type="molecule type" value="mRNA"/>
</dbReference>
<dbReference type="EMBL" id="AK091513">
    <property type="protein sequence ID" value="BAG52376.1"/>
    <property type="molecule type" value="mRNA"/>
</dbReference>
<dbReference type="EMBL" id="AL356017">
    <property type="status" value="NOT_ANNOTATED_CDS"/>
    <property type="molecule type" value="Genomic_DNA"/>
</dbReference>
<dbReference type="EMBL" id="AL390254">
    <property type="status" value="NOT_ANNOTATED_CDS"/>
    <property type="molecule type" value="Genomic_DNA"/>
</dbReference>
<dbReference type="EMBL" id="CH471061">
    <property type="protein sequence ID" value="EAW81596.1"/>
    <property type="molecule type" value="Genomic_DNA"/>
</dbReference>
<dbReference type="EMBL" id="BC150287">
    <property type="protein sequence ID" value="AAI50288.1"/>
    <property type="molecule type" value="mRNA"/>
</dbReference>
<dbReference type="CCDS" id="CCDS55941.1">
    <molecule id="Q9UPY3-2"/>
</dbReference>
<dbReference type="CCDS" id="CCDS9931.1">
    <molecule id="Q9UPY3-1"/>
</dbReference>
<dbReference type="RefSeq" id="NP_001182502.1">
    <molecule id="Q9UPY3-2"/>
    <property type="nucleotide sequence ID" value="NM_001195573.1"/>
</dbReference>
<dbReference type="RefSeq" id="NP_001258211.1">
    <molecule id="Q9UPY3-1"/>
    <property type="nucleotide sequence ID" value="NM_001271282.3"/>
</dbReference>
<dbReference type="RefSeq" id="NP_001278557.1">
    <molecule id="Q9UPY3-1"/>
    <property type="nucleotide sequence ID" value="NM_001291628.2"/>
</dbReference>
<dbReference type="RefSeq" id="NP_001382606.1">
    <molecule id="Q9UPY3-1"/>
    <property type="nucleotide sequence ID" value="NM_001395677.1"/>
</dbReference>
<dbReference type="RefSeq" id="NP_001382607.1">
    <molecule id="Q9UPY3-1"/>
    <property type="nucleotide sequence ID" value="NM_001395678.1"/>
</dbReference>
<dbReference type="RefSeq" id="NP_001382608.1">
    <molecule id="Q9UPY3-1"/>
    <property type="nucleotide sequence ID" value="NM_001395679.1"/>
</dbReference>
<dbReference type="RefSeq" id="NP_001382609.1">
    <molecule id="Q9UPY3-1"/>
    <property type="nucleotide sequence ID" value="NM_001395680.1"/>
</dbReference>
<dbReference type="RefSeq" id="NP_001382611.1">
    <molecule id="Q9UPY3-1"/>
    <property type="nucleotide sequence ID" value="NM_001395682.1"/>
</dbReference>
<dbReference type="RefSeq" id="NP_001382612.1">
    <molecule id="Q9UPY3-1"/>
    <property type="nucleotide sequence ID" value="NM_001395683.1"/>
</dbReference>
<dbReference type="RefSeq" id="NP_001382613.1">
    <molecule id="Q9UPY3-1"/>
    <property type="nucleotide sequence ID" value="NM_001395684.1"/>
</dbReference>
<dbReference type="RefSeq" id="NP_085124.2">
    <molecule id="Q9UPY3-1"/>
    <property type="nucleotide sequence ID" value="NM_030621.4"/>
</dbReference>
<dbReference type="RefSeq" id="NP_803187.1">
    <molecule id="Q9UPY3-1"/>
    <property type="nucleotide sequence ID" value="NM_177438.3"/>
</dbReference>
<dbReference type="RefSeq" id="XP_011534901.1">
    <property type="nucleotide sequence ID" value="XM_011536599.1"/>
</dbReference>
<dbReference type="RefSeq" id="XP_011534902.1">
    <property type="nucleotide sequence ID" value="XM_011536600.2"/>
</dbReference>
<dbReference type="RefSeq" id="XP_011534903.1">
    <property type="nucleotide sequence ID" value="XM_011536601.2"/>
</dbReference>
<dbReference type="RefSeq" id="XP_011534904.1">
    <property type="nucleotide sequence ID" value="XM_011536602.2"/>
</dbReference>
<dbReference type="RefSeq" id="XP_016876609.1">
    <property type="nucleotide sequence ID" value="XM_017021120.1"/>
</dbReference>
<dbReference type="RefSeq" id="XP_016876610.1">
    <property type="nucleotide sequence ID" value="XM_017021121.1"/>
</dbReference>
<dbReference type="PDB" id="2EB1">
    <property type="method" value="X-ray"/>
    <property type="resolution" value="2.00 A"/>
    <property type="chains" value="A/B/C=1660-1852"/>
</dbReference>
<dbReference type="PDB" id="4NGB">
    <property type="method" value="X-ray"/>
    <property type="resolution" value="2.25 A"/>
    <property type="chains" value="A=765-1065"/>
</dbReference>
<dbReference type="PDB" id="4NGC">
    <property type="method" value="X-ray"/>
    <property type="resolution" value="2.10 A"/>
    <property type="chains" value="A=765-1065"/>
</dbReference>
<dbReference type="PDB" id="4NGD">
    <property type="method" value="X-ray"/>
    <property type="resolution" value="1.96 A"/>
    <property type="chains" value="A=765-1065"/>
</dbReference>
<dbReference type="PDB" id="4NGF">
    <property type="method" value="X-ray"/>
    <property type="resolution" value="3.10 A"/>
    <property type="chains" value="A/B/C/D=765-1065"/>
</dbReference>
<dbReference type="PDB" id="4NGG">
    <property type="method" value="X-ray"/>
    <property type="resolution" value="2.60 A"/>
    <property type="chains" value="A=765-1065"/>
</dbReference>
<dbReference type="PDB" id="4NH3">
    <property type="method" value="X-ray"/>
    <property type="resolution" value="2.62 A"/>
    <property type="chains" value="A=765-1065"/>
</dbReference>
<dbReference type="PDB" id="4NH5">
    <property type="method" value="X-ray"/>
    <property type="resolution" value="2.55 A"/>
    <property type="chains" value="A=765-1065"/>
</dbReference>
<dbReference type="PDB" id="4NH6">
    <property type="method" value="X-ray"/>
    <property type="resolution" value="2.55 A"/>
    <property type="chains" value="A=765-1065"/>
</dbReference>
<dbReference type="PDB" id="4NHA">
    <property type="method" value="X-ray"/>
    <property type="resolution" value="3.40 A"/>
    <property type="chains" value="A=765-1065"/>
</dbReference>
<dbReference type="PDB" id="4WYQ">
    <property type="method" value="X-ray"/>
    <property type="resolution" value="3.20 A"/>
    <property type="chains" value="A/D=267-389"/>
</dbReference>
<dbReference type="PDB" id="5ZAK">
    <property type="method" value="EM"/>
    <property type="resolution" value="4.40 A"/>
    <property type="chains" value="A=1-1922"/>
</dbReference>
<dbReference type="PDB" id="5ZAL">
    <property type="method" value="EM"/>
    <property type="resolution" value="4.70 A"/>
    <property type="chains" value="A=1-1922"/>
</dbReference>
<dbReference type="PDB" id="5ZAM">
    <property type="method" value="EM"/>
    <property type="resolution" value="5.70 A"/>
    <property type="chains" value="A=1-1922"/>
</dbReference>
<dbReference type="PDB" id="7XW2">
    <property type="method" value="EM"/>
    <property type="resolution" value="3.04 A"/>
    <property type="chains" value="A=1-1922"/>
</dbReference>
<dbReference type="PDB" id="7XW3">
    <property type="method" value="EM"/>
    <property type="resolution" value="4.04 A"/>
    <property type="chains" value="A=1-1922"/>
</dbReference>
<dbReference type="PDBsum" id="2EB1"/>
<dbReference type="PDBsum" id="4NGB"/>
<dbReference type="PDBsum" id="4NGC"/>
<dbReference type="PDBsum" id="4NGD"/>
<dbReference type="PDBsum" id="4NGF"/>
<dbReference type="PDBsum" id="4NGG"/>
<dbReference type="PDBsum" id="4NH3"/>
<dbReference type="PDBsum" id="4NH5"/>
<dbReference type="PDBsum" id="4NH6"/>
<dbReference type="PDBsum" id="4NHA"/>
<dbReference type="PDBsum" id="4WYQ"/>
<dbReference type="PDBsum" id="5ZAK"/>
<dbReference type="PDBsum" id="5ZAL"/>
<dbReference type="PDBsum" id="5ZAM"/>
<dbReference type="PDBsum" id="7XW2"/>
<dbReference type="PDBsum" id="7XW3"/>
<dbReference type="EMDB" id="EMD-33489"/>
<dbReference type="EMDB" id="EMD-33490"/>
<dbReference type="EMDB" id="EMD-5601"/>
<dbReference type="EMDB" id="EMD-5602"/>
<dbReference type="EMDB" id="EMD-5603"/>
<dbReference type="EMDB" id="EMD-5604"/>
<dbReference type="EMDB" id="EMD-5605"/>
<dbReference type="EMDB" id="EMD-5606"/>
<dbReference type="EMDB" id="EMD-6904"/>
<dbReference type="EMDB" id="EMD-6905"/>
<dbReference type="EMDB" id="EMD-6906"/>
<dbReference type="SMR" id="Q9UPY3"/>
<dbReference type="BioGRID" id="116978">
    <property type="interactions" value="201"/>
</dbReference>
<dbReference type="ComplexPortal" id="CPX-1072">
    <property type="entry name" value="RISC-loading complex, PRKRA variant"/>
</dbReference>
<dbReference type="ComplexPortal" id="CPX-134">
    <property type="entry name" value="RISC-loading complex, TARBP2 variant"/>
</dbReference>
<dbReference type="CORUM" id="Q9UPY3"/>
<dbReference type="DIP" id="DIP-29664N"/>
<dbReference type="FunCoup" id="Q9UPY3">
    <property type="interactions" value="2005"/>
</dbReference>
<dbReference type="IntAct" id="Q9UPY3">
    <property type="interactions" value="190"/>
</dbReference>
<dbReference type="MINT" id="Q9UPY3"/>
<dbReference type="STRING" id="9606.ENSP00000437256"/>
<dbReference type="ChEMBL" id="CHEMBL2311232"/>
<dbReference type="GlyGen" id="Q9UPY3">
    <property type="glycosylation" value="3 sites, 1 N-linked glycan (1 site), 1 O-linked glycan (1 site)"/>
</dbReference>
<dbReference type="iPTMnet" id="Q9UPY3"/>
<dbReference type="MetOSite" id="Q9UPY3"/>
<dbReference type="PhosphoSitePlus" id="Q9UPY3"/>
<dbReference type="SwissPalm" id="Q9UPY3"/>
<dbReference type="BioMuta" id="DICER1"/>
<dbReference type="DMDM" id="257051056"/>
<dbReference type="jPOST" id="Q9UPY3"/>
<dbReference type="MassIVE" id="Q9UPY3"/>
<dbReference type="PaxDb" id="9606-ENSP00000437256"/>
<dbReference type="PeptideAtlas" id="Q9UPY3"/>
<dbReference type="ProteomicsDB" id="3598"/>
<dbReference type="ProteomicsDB" id="85471">
    <molecule id="Q9UPY3-1"/>
</dbReference>
<dbReference type="ProteomicsDB" id="85472">
    <molecule id="Q9UPY3-2"/>
</dbReference>
<dbReference type="Pumba" id="Q9UPY3"/>
<dbReference type="Antibodypedia" id="19">
    <property type="antibodies" value="549 antibodies from 39 providers"/>
</dbReference>
<dbReference type="DNASU" id="23405"/>
<dbReference type="Ensembl" id="ENST00000343455.8">
    <molecule id="Q9UPY3-1"/>
    <property type="protein sequence ID" value="ENSP00000343745.3"/>
    <property type="gene ID" value="ENSG00000100697.17"/>
</dbReference>
<dbReference type="Ensembl" id="ENST00000393063.6">
    <molecule id="Q9UPY3-1"/>
    <property type="protein sequence ID" value="ENSP00000376783.1"/>
    <property type="gene ID" value="ENSG00000100697.17"/>
</dbReference>
<dbReference type="Ensembl" id="ENST00000526495.6">
    <molecule id="Q9UPY3-1"/>
    <property type="protein sequence ID" value="ENSP00000437256.1"/>
    <property type="gene ID" value="ENSG00000100697.17"/>
</dbReference>
<dbReference type="Ensembl" id="ENST00000527414.5">
    <molecule id="Q9UPY3-1"/>
    <property type="protein sequence ID" value="ENSP00000435681.1"/>
    <property type="gene ID" value="ENSG00000100697.17"/>
</dbReference>
<dbReference type="Ensembl" id="ENST00000529720.2">
    <molecule id="Q9UPY3-1"/>
    <property type="protein sequence ID" value="ENSP00000433926.2"/>
    <property type="gene ID" value="ENSG00000100697.17"/>
</dbReference>
<dbReference type="Ensembl" id="ENST00000531162.7">
    <molecule id="Q9UPY3-1"/>
    <property type="protein sequence ID" value="ENSP00000433060.3"/>
    <property type="gene ID" value="ENSG00000100697.17"/>
</dbReference>
<dbReference type="Ensembl" id="ENST00000541352.5">
    <molecule id="Q9UPY3-2"/>
    <property type="protein sequence ID" value="ENSP00000444719.1"/>
    <property type="gene ID" value="ENSG00000100697.17"/>
</dbReference>
<dbReference type="Ensembl" id="ENST00000674628.2">
    <molecule id="Q9UPY3-1"/>
    <property type="protein sequence ID" value="ENSP00000502730.2"/>
    <property type="gene ID" value="ENSG00000100697.17"/>
</dbReference>
<dbReference type="GeneID" id="23405"/>
<dbReference type="KEGG" id="hsa:23405"/>
<dbReference type="MANE-Select" id="ENST00000343455.8">
    <property type="protein sequence ID" value="ENSP00000343745.3"/>
    <property type="RefSeq nucleotide sequence ID" value="NM_177438.3"/>
    <property type="RefSeq protein sequence ID" value="NP_803187.1"/>
</dbReference>
<dbReference type="UCSC" id="uc001ydv.4">
    <molecule id="Q9UPY3-1"/>
    <property type="organism name" value="human"/>
</dbReference>
<dbReference type="AGR" id="HGNC:17098"/>
<dbReference type="CTD" id="23405"/>
<dbReference type="DisGeNET" id="23405"/>
<dbReference type="GeneCards" id="DICER1"/>
<dbReference type="GeneReviews" id="DICER1"/>
<dbReference type="HGNC" id="HGNC:17098">
    <property type="gene designation" value="DICER1"/>
</dbReference>
<dbReference type="HPA" id="ENSG00000100697">
    <property type="expression patterns" value="Low tissue specificity"/>
</dbReference>
<dbReference type="MalaCards" id="DICER1"/>
<dbReference type="MIM" id="138800">
    <property type="type" value="phenotype"/>
</dbReference>
<dbReference type="MIM" id="180295">
    <property type="type" value="phenotype"/>
</dbReference>
<dbReference type="MIM" id="601200">
    <property type="type" value="phenotype"/>
</dbReference>
<dbReference type="MIM" id="606241">
    <property type="type" value="gene"/>
</dbReference>
<dbReference type="MIM" id="618272">
    <property type="type" value="phenotype"/>
</dbReference>
<dbReference type="neXtProt" id="NX_Q9UPY3"/>
<dbReference type="OpenTargets" id="ENSG00000100697"/>
<dbReference type="Orphanet" id="284343">
    <property type="disease" value="DICER1 tumor-predisposition syndrome"/>
</dbReference>
<dbReference type="Orphanet" id="99757">
    <property type="disease" value="Embryonal rhabdomyosarcoma"/>
</dbReference>
<dbReference type="Orphanet" id="276399">
    <property type="disease" value="Familial multinodular goiter"/>
</dbReference>
<dbReference type="Orphanet" id="404476">
    <property type="disease" value="Global developmental delay-lung cysts-overgrowth-Wilms tumor syndrome"/>
</dbReference>
<dbReference type="Orphanet" id="99914">
    <property type="disease" value="Gynandroblastoma"/>
</dbReference>
<dbReference type="Orphanet" id="99915">
    <property type="disease" value="Malignant granulosa cell tumor of the ovary"/>
</dbReference>
<dbReference type="Orphanet" id="99916">
    <property type="disease" value="Malignant Sertoli-Leydig cell tumor of the ovary"/>
</dbReference>
<dbReference type="PharmGKB" id="PA38437"/>
<dbReference type="VEuPathDB" id="HostDB:ENSG00000100697"/>
<dbReference type="eggNOG" id="KOG0701">
    <property type="taxonomic scope" value="Eukaryota"/>
</dbReference>
<dbReference type="GeneTree" id="ENSGT00940000156287"/>
<dbReference type="HOGENOM" id="CLU_000907_4_4_1"/>
<dbReference type="InParanoid" id="Q9UPY3"/>
<dbReference type="OMA" id="CGFHKYF"/>
<dbReference type="OrthoDB" id="2392202at2759"/>
<dbReference type="PAN-GO" id="Q9UPY3">
    <property type="GO annotations" value="9 GO annotations based on evolutionary models"/>
</dbReference>
<dbReference type="PhylomeDB" id="Q9UPY3"/>
<dbReference type="TreeFam" id="TF330258"/>
<dbReference type="BRENDA" id="3.1.26.3">
    <property type="organism ID" value="2681"/>
</dbReference>
<dbReference type="PathwayCommons" id="Q9UPY3"/>
<dbReference type="Reactome" id="R-HSA-203927">
    <property type="pathway name" value="MicroRNA (miRNA) biogenesis"/>
</dbReference>
<dbReference type="Reactome" id="R-HSA-426486">
    <property type="pathway name" value="Small interfering RNA (siRNA) biogenesis"/>
</dbReference>
<dbReference type="Reactome" id="R-HSA-9708296">
    <property type="pathway name" value="tRNA-derived small RNA (tsRNA or tRNA-related fragment, tRF) biogenesis"/>
</dbReference>
<dbReference type="Reactome" id="R-HSA-9820841">
    <property type="pathway name" value="M-decay: degradation of maternal mRNAs by maternally stored factors"/>
</dbReference>
<dbReference type="Reactome" id="R-HSA-9824594">
    <property type="pathway name" value="Regulation of MITF-M-dependent genes involved in apoptosis"/>
</dbReference>
<dbReference type="SignaLink" id="Q9UPY3"/>
<dbReference type="SIGNOR" id="Q9UPY3"/>
<dbReference type="BioGRID-ORCS" id="23405">
    <property type="hits" value="380 hits in 1176 CRISPR screens"/>
</dbReference>
<dbReference type="CD-CODE" id="278829DE">
    <property type="entry name" value="Chromatoid body"/>
</dbReference>
<dbReference type="ChiTaRS" id="DICER1">
    <property type="organism name" value="human"/>
</dbReference>
<dbReference type="EvolutionaryTrace" id="Q9UPY3"/>
<dbReference type="GeneWiki" id="DICER1"/>
<dbReference type="GenomeRNAi" id="23405"/>
<dbReference type="Pharos" id="Q9UPY3">
    <property type="development level" value="Tbio"/>
</dbReference>
<dbReference type="PRO" id="PR:Q9UPY3"/>
<dbReference type="Proteomes" id="UP000005640">
    <property type="component" value="Chromosome 14"/>
</dbReference>
<dbReference type="RNAct" id="Q9UPY3">
    <property type="molecule type" value="protein"/>
</dbReference>
<dbReference type="Bgee" id="ENSG00000100697">
    <property type="expression patterns" value="Expressed in cauda epididymis and 211 other cell types or tissues"/>
</dbReference>
<dbReference type="ExpressionAtlas" id="Q9UPY3">
    <property type="expression patterns" value="baseline and differential"/>
</dbReference>
<dbReference type="GO" id="GO:0005737">
    <property type="term" value="C:cytoplasm"/>
    <property type="evidence" value="ECO:0000318"/>
    <property type="project" value="GO_Central"/>
</dbReference>
<dbReference type="GO" id="GO:0005829">
    <property type="term" value="C:cytosol"/>
    <property type="evidence" value="ECO:0000304"/>
    <property type="project" value="Reactome"/>
</dbReference>
<dbReference type="GO" id="GO:0070062">
    <property type="term" value="C:extracellular exosome"/>
    <property type="evidence" value="ECO:0000314"/>
    <property type="project" value="BHF-UCL"/>
</dbReference>
<dbReference type="GO" id="GO:0005634">
    <property type="term" value="C:nucleus"/>
    <property type="evidence" value="ECO:0000318"/>
    <property type="project" value="GO_Central"/>
</dbReference>
<dbReference type="GO" id="GO:0048471">
    <property type="term" value="C:perinuclear region of cytoplasm"/>
    <property type="evidence" value="ECO:0000314"/>
    <property type="project" value="UniProtKB"/>
</dbReference>
<dbReference type="GO" id="GO:0016442">
    <property type="term" value="C:RISC complex"/>
    <property type="evidence" value="ECO:0000314"/>
    <property type="project" value="UniProtKB"/>
</dbReference>
<dbReference type="GO" id="GO:0070578">
    <property type="term" value="C:RISC-loading complex"/>
    <property type="evidence" value="ECO:0000314"/>
    <property type="project" value="UniProtKB"/>
</dbReference>
<dbReference type="GO" id="GO:0005524">
    <property type="term" value="F:ATP binding"/>
    <property type="evidence" value="ECO:0007669"/>
    <property type="project" value="UniProtKB-KW"/>
</dbReference>
<dbReference type="GO" id="GO:0004530">
    <property type="term" value="F:deoxyribonuclease I activity"/>
    <property type="evidence" value="ECO:0000318"/>
    <property type="project" value="GO_Central"/>
</dbReference>
<dbReference type="GO" id="GO:0003725">
    <property type="term" value="F:double-stranded RNA binding"/>
    <property type="evidence" value="ECO:0000314"/>
    <property type="project" value="UniProtKB"/>
</dbReference>
<dbReference type="GO" id="GO:0004386">
    <property type="term" value="F:helicase activity"/>
    <property type="evidence" value="ECO:0007669"/>
    <property type="project" value="UniProtKB-KW"/>
</dbReference>
<dbReference type="GO" id="GO:0046872">
    <property type="term" value="F:metal ion binding"/>
    <property type="evidence" value="ECO:0007669"/>
    <property type="project" value="UniProtKB-KW"/>
</dbReference>
<dbReference type="GO" id="GO:0070883">
    <property type="term" value="F:pre-miRNA binding"/>
    <property type="evidence" value="ECO:0000314"/>
    <property type="project" value="BHF-UCL"/>
</dbReference>
<dbReference type="GO" id="GO:0019904">
    <property type="term" value="F:protein domain specific binding"/>
    <property type="evidence" value="ECO:0000353"/>
    <property type="project" value="BHF-UCL"/>
</dbReference>
<dbReference type="GO" id="GO:0004525">
    <property type="term" value="F:ribonuclease III activity"/>
    <property type="evidence" value="ECO:0000314"/>
    <property type="project" value="BHF-UCL"/>
</dbReference>
<dbReference type="GO" id="GO:0003723">
    <property type="term" value="F:RNA binding"/>
    <property type="evidence" value="ECO:0000318"/>
    <property type="project" value="GO_Central"/>
</dbReference>
<dbReference type="GO" id="GO:0004521">
    <property type="term" value="F:RNA endonuclease activity"/>
    <property type="evidence" value="ECO:0000314"/>
    <property type="project" value="BHF-UCL"/>
</dbReference>
<dbReference type="GO" id="GO:0035197">
    <property type="term" value="F:siRNA binding"/>
    <property type="evidence" value="ECO:0000314"/>
    <property type="project" value="BHF-UCL"/>
</dbReference>
<dbReference type="GO" id="GO:0006309">
    <property type="term" value="P:apoptotic DNA fragmentation"/>
    <property type="evidence" value="ECO:0000318"/>
    <property type="project" value="GO_Central"/>
</dbReference>
<dbReference type="GO" id="GO:0098795">
    <property type="term" value="P:global gene silencing by mRNA cleavage"/>
    <property type="evidence" value="ECO:0000315"/>
    <property type="project" value="UniProtKB"/>
</dbReference>
<dbReference type="GO" id="GO:0010586">
    <property type="term" value="P:miRNA metabolic process"/>
    <property type="evidence" value="ECO:0000304"/>
    <property type="project" value="Reactome"/>
</dbReference>
<dbReference type="GO" id="GO:0035196">
    <property type="term" value="P:miRNA processing"/>
    <property type="evidence" value="ECO:0000314"/>
    <property type="project" value="UniProtKB"/>
</dbReference>
<dbReference type="GO" id="GO:0010629">
    <property type="term" value="P:negative regulation of gene expression"/>
    <property type="evidence" value="ECO:0000315"/>
    <property type="project" value="ARUK-UCL"/>
</dbReference>
<dbReference type="GO" id="GO:0010626">
    <property type="term" value="P:negative regulation of Schwann cell proliferation"/>
    <property type="evidence" value="ECO:0000250"/>
    <property type="project" value="BHF-UCL"/>
</dbReference>
<dbReference type="GO" id="GO:0000122">
    <property type="term" value="P:negative regulation of transcription by RNA polymerase II"/>
    <property type="evidence" value="ECO:0000250"/>
    <property type="project" value="BHF-UCL"/>
</dbReference>
<dbReference type="GO" id="GO:0032720">
    <property type="term" value="P:negative regulation of tumor necrosis factor production"/>
    <property type="evidence" value="ECO:0000315"/>
    <property type="project" value="ARUK-UCL"/>
</dbReference>
<dbReference type="GO" id="GO:0010804">
    <property type="term" value="P:negative regulation of tumor necrosis factor-mediated signaling pathway"/>
    <property type="evidence" value="ECO:0000314"/>
    <property type="project" value="ARUK-UCL"/>
</dbReference>
<dbReference type="GO" id="GO:0021675">
    <property type="term" value="P:nerve development"/>
    <property type="evidence" value="ECO:0000250"/>
    <property type="project" value="BHF-UCL"/>
</dbReference>
<dbReference type="GO" id="GO:0048812">
    <property type="term" value="P:neuron projection morphogenesis"/>
    <property type="evidence" value="ECO:0000250"/>
    <property type="project" value="BHF-UCL"/>
</dbReference>
<dbReference type="GO" id="GO:0032290">
    <property type="term" value="P:peripheral nervous system myelin formation"/>
    <property type="evidence" value="ECO:0000250"/>
    <property type="project" value="BHF-UCL"/>
</dbReference>
<dbReference type="GO" id="GO:0031643">
    <property type="term" value="P:positive regulation of myelination"/>
    <property type="evidence" value="ECO:0000250"/>
    <property type="project" value="BHF-UCL"/>
</dbReference>
<dbReference type="GO" id="GO:0014040">
    <property type="term" value="P:positive regulation of Schwann cell differentiation"/>
    <property type="evidence" value="ECO:0000250"/>
    <property type="project" value="BHF-UCL"/>
</dbReference>
<dbReference type="GO" id="GO:0031054">
    <property type="term" value="P:pre-miRNA processing"/>
    <property type="evidence" value="ECO:0000314"/>
    <property type="project" value="UniProtKB"/>
</dbReference>
<dbReference type="GO" id="GO:0070922">
    <property type="term" value="P:RISC complex assembly"/>
    <property type="evidence" value="ECO:0000314"/>
    <property type="project" value="BHF-UCL"/>
</dbReference>
<dbReference type="GO" id="GO:0030422">
    <property type="term" value="P:siRNA processing"/>
    <property type="evidence" value="ECO:0000314"/>
    <property type="project" value="UniProtKB"/>
</dbReference>
<dbReference type="GO" id="GO:0016078">
    <property type="term" value="P:tRNA decay"/>
    <property type="evidence" value="ECO:0000304"/>
    <property type="project" value="Reactome"/>
</dbReference>
<dbReference type="CDD" id="cd18034">
    <property type="entry name" value="DEXHc_dicer"/>
    <property type="match status" value="1"/>
</dbReference>
<dbReference type="CDD" id="cd15903">
    <property type="entry name" value="Dicer_PBD"/>
    <property type="match status" value="1"/>
</dbReference>
<dbReference type="CDD" id="cd10843">
    <property type="entry name" value="DSRM_DICER"/>
    <property type="match status" value="1"/>
</dbReference>
<dbReference type="CDD" id="cd02843">
    <property type="entry name" value="PAZ_dicer_like"/>
    <property type="match status" value="1"/>
</dbReference>
<dbReference type="CDD" id="cd00593">
    <property type="entry name" value="RIBOc"/>
    <property type="match status" value="2"/>
</dbReference>
<dbReference type="CDD" id="cd18802">
    <property type="entry name" value="SF2_C_dicer"/>
    <property type="match status" value="1"/>
</dbReference>
<dbReference type="DisProt" id="DP02781"/>
<dbReference type="FunFam" id="1.10.1520.10:FF:000023">
    <property type="entry name" value="Endoribonuclease dcr-1"/>
    <property type="match status" value="1"/>
</dbReference>
<dbReference type="FunFam" id="3.40.50.300:FF:000628">
    <property type="entry name" value="Endoribonuclease Dicer"/>
    <property type="match status" value="1"/>
</dbReference>
<dbReference type="FunFam" id="3.30.160.20:FF:000015">
    <property type="entry name" value="endoribonuclease Dicer"/>
    <property type="match status" value="1"/>
</dbReference>
<dbReference type="FunFam" id="3.30.160.380:FF:000002">
    <property type="entry name" value="Endoribonuclease Dicer isoform 1"/>
    <property type="match status" value="1"/>
</dbReference>
<dbReference type="FunFam" id="3.40.50.300:FF:000588">
    <property type="entry name" value="Endoribonuclease Dicer isoform 1"/>
    <property type="match status" value="1"/>
</dbReference>
<dbReference type="FunFam" id="2.170.260.10:FF:000002">
    <property type="entry name" value="Putative Endoribonuclease Dicer"/>
    <property type="match status" value="1"/>
</dbReference>
<dbReference type="FunFam" id="1.10.1520.10:FF:000005">
    <property type="entry name" value="Putative endoribonuclease dicer"/>
    <property type="match status" value="1"/>
</dbReference>
<dbReference type="Gene3D" id="3.30.160.20">
    <property type="match status" value="1"/>
</dbReference>
<dbReference type="Gene3D" id="3.30.160.380">
    <property type="entry name" value="Dicer dimerisation domain"/>
    <property type="match status" value="1"/>
</dbReference>
<dbReference type="Gene3D" id="3.40.50.300">
    <property type="entry name" value="P-loop containing nucleotide triphosphate hydrolases"/>
    <property type="match status" value="2"/>
</dbReference>
<dbReference type="Gene3D" id="2.170.260.10">
    <property type="entry name" value="paz domain"/>
    <property type="match status" value="1"/>
</dbReference>
<dbReference type="Gene3D" id="1.10.1520.10">
    <property type="entry name" value="Ribonuclease III domain"/>
    <property type="match status" value="2"/>
</dbReference>
<dbReference type="InterPro" id="IPR011545">
    <property type="entry name" value="DEAD/DEAH_box_helicase_dom"/>
</dbReference>
<dbReference type="InterPro" id="IPR038248">
    <property type="entry name" value="Dicer_dimer_sf"/>
</dbReference>
<dbReference type="InterPro" id="IPR005034">
    <property type="entry name" value="Dicer_dimerisation_dom"/>
</dbReference>
<dbReference type="InterPro" id="IPR044441">
    <property type="entry name" value="DICER_DSRM"/>
</dbReference>
<dbReference type="InterPro" id="IPR048513">
    <property type="entry name" value="Dicer_PBD"/>
</dbReference>
<dbReference type="InterPro" id="IPR048512">
    <property type="entry name" value="Dicer_platform"/>
</dbReference>
<dbReference type="InterPro" id="IPR014720">
    <property type="entry name" value="dsRBD_dom"/>
</dbReference>
<dbReference type="InterPro" id="IPR014001">
    <property type="entry name" value="Helicase_ATP-bd"/>
</dbReference>
<dbReference type="InterPro" id="IPR001650">
    <property type="entry name" value="Helicase_C-like"/>
</dbReference>
<dbReference type="InterPro" id="IPR027417">
    <property type="entry name" value="P-loop_NTPase"/>
</dbReference>
<dbReference type="InterPro" id="IPR003100">
    <property type="entry name" value="PAZ_dom"/>
</dbReference>
<dbReference type="InterPro" id="IPR036085">
    <property type="entry name" value="PAZ_dom_sf"/>
</dbReference>
<dbReference type="InterPro" id="IPR000999">
    <property type="entry name" value="RNase_III_dom"/>
</dbReference>
<dbReference type="InterPro" id="IPR036389">
    <property type="entry name" value="RNase_III_sf"/>
</dbReference>
<dbReference type="PANTHER" id="PTHR14950">
    <property type="entry name" value="DICER-RELATED"/>
    <property type="match status" value="1"/>
</dbReference>
<dbReference type="PANTHER" id="PTHR14950:SF37">
    <property type="entry name" value="ENDORIBONUCLEASE DICER"/>
    <property type="match status" value="1"/>
</dbReference>
<dbReference type="Pfam" id="PF00270">
    <property type="entry name" value="DEAD"/>
    <property type="match status" value="1"/>
</dbReference>
<dbReference type="Pfam" id="PF03368">
    <property type="entry name" value="Dicer_dimer"/>
    <property type="match status" value="1"/>
</dbReference>
<dbReference type="Pfam" id="PF20932">
    <property type="entry name" value="Dicer_dsRBD"/>
    <property type="match status" value="1"/>
</dbReference>
<dbReference type="Pfam" id="PF20930">
    <property type="entry name" value="Dicer_PBD"/>
    <property type="match status" value="1"/>
</dbReference>
<dbReference type="Pfam" id="PF20931">
    <property type="entry name" value="Dicer_platform"/>
    <property type="match status" value="1"/>
</dbReference>
<dbReference type="Pfam" id="PF00271">
    <property type="entry name" value="Helicase_C"/>
    <property type="match status" value="1"/>
</dbReference>
<dbReference type="Pfam" id="PF02170">
    <property type="entry name" value="PAZ"/>
    <property type="match status" value="1"/>
</dbReference>
<dbReference type="Pfam" id="PF00636">
    <property type="entry name" value="Ribonuclease_3"/>
    <property type="match status" value="2"/>
</dbReference>
<dbReference type="SMART" id="SM00487">
    <property type="entry name" value="DEXDc"/>
    <property type="match status" value="1"/>
</dbReference>
<dbReference type="SMART" id="SM00358">
    <property type="entry name" value="DSRM"/>
    <property type="match status" value="1"/>
</dbReference>
<dbReference type="SMART" id="SM00490">
    <property type="entry name" value="HELICc"/>
    <property type="match status" value="1"/>
</dbReference>
<dbReference type="SMART" id="SM00949">
    <property type="entry name" value="PAZ"/>
    <property type="match status" value="1"/>
</dbReference>
<dbReference type="SMART" id="SM00535">
    <property type="entry name" value="RIBOc"/>
    <property type="match status" value="2"/>
</dbReference>
<dbReference type="SUPFAM" id="SSF54768">
    <property type="entry name" value="dsRNA-binding domain-like"/>
    <property type="match status" value="1"/>
</dbReference>
<dbReference type="SUPFAM" id="SSF52540">
    <property type="entry name" value="P-loop containing nucleoside triphosphate hydrolases"/>
    <property type="match status" value="1"/>
</dbReference>
<dbReference type="SUPFAM" id="SSF101690">
    <property type="entry name" value="PAZ domain"/>
    <property type="match status" value="1"/>
</dbReference>
<dbReference type="SUPFAM" id="SSF69065">
    <property type="entry name" value="RNase III domain-like"/>
    <property type="match status" value="2"/>
</dbReference>
<dbReference type="PROSITE" id="PS51327">
    <property type="entry name" value="DICER_DSRBF"/>
    <property type="match status" value="1"/>
</dbReference>
<dbReference type="PROSITE" id="PS50137">
    <property type="entry name" value="DS_RBD"/>
    <property type="match status" value="1"/>
</dbReference>
<dbReference type="PROSITE" id="PS51192">
    <property type="entry name" value="HELICASE_ATP_BIND_1"/>
    <property type="match status" value="1"/>
</dbReference>
<dbReference type="PROSITE" id="PS51194">
    <property type="entry name" value="HELICASE_CTER"/>
    <property type="match status" value="1"/>
</dbReference>
<dbReference type="PROSITE" id="PS50821">
    <property type="entry name" value="PAZ"/>
    <property type="match status" value="1"/>
</dbReference>
<dbReference type="PROSITE" id="PS00517">
    <property type="entry name" value="RNASE_3_1"/>
    <property type="match status" value="1"/>
</dbReference>
<dbReference type="PROSITE" id="PS50142">
    <property type="entry name" value="RNASE_3_2"/>
    <property type="match status" value="2"/>
</dbReference>
<feature type="chain" id="PRO_0000180470" description="Endoribonuclease Dicer">
    <location>
        <begin position="1"/>
        <end position="1922"/>
    </location>
</feature>
<feature type="domain" description="Helicase ATP-binding" evidence="6">
    <location>
        <begin position="51"/>
        <end position="227"/>
    </location>
</feature>
<feature type="domain" description="Helicase C-terminal" evidence="7">
    <location>
        <begin position="433"/>
        <end position="602"/>
    </location>
</feature>
<feature type="domain" description="Dicer dsRNA-binding fold" evidence="8">
    <location>
        <begin position="630"/>
        <end position="722"/>
    </location>
</feature>
<feature type="domain" description="PAZ" evidence="3">
    <location>
        <begin position="895"/>
        <end position="1042"/>
    </location>
</feature>
<feature type="domain" description="RNase III 1" evidence="4">
    <location>
        <begin position="1276"/>
        <end position="1403"/>
    </location>
</feature>
<feature type="domain" description="RNase III 2" evidence="4">
    <location>
        <begin position="1666"/>
        <end position="1824"/>
    </location>
</feature>
<feature type="domain" description="DRBM" evidence="5">
    <location>
        <begin position="1849"/>
        <end position="1914"/>
    </location>
</feature>
<feature type="region of interest" description="Required for interaction with PRKRA and TARBP2">
    <location>
        <begin position="256"/>
        <end position="595"/>
    </location>
</feature>
<feature type="region of interest" description="Disordered" evidence="9">
    <location>
        <begin position="409"/>
        <end position="433"/>
    </location>
</feature>
<feature type="short sequence motif" description="DECH box">
    <location>
        <begin position="175"/>
        <end position="178"/>
    </location>
</feature>
<feature type="compositionally biased region" description="Acidic residues" evidence="9">
    <location>
        <begin position="414"/>
        <end position="425"/>
    </location>
</feature>
<feature type="binding site" evidence="6">
    <location>
        <begin position="64"/>
        <end position="71"/>
    </location>
    <ligand>
        <name>ATP</name>
        <dbReference type="ChEBI" id="CHEBI:30616"/>
    </ligand>
</feature>
<feature type="binding site" evidence="1">
    <location>
        <position position="1316"/>
    </location>
    <ligand>
        <name>Mg(2+)</name>
        <dbReference type="ChEBI" id="CHEBI:18420"/>
        <label>1</label>
    </ligand>
</feature>
<feature type="binding site" evidence="1">
    <location>
        <position position="1395"/>
    </location>
    <ligand>
        <name>Mg(2+)</name>
        <dbReference type="ChEBI" id="CHEBI:18420"/>
        <label>1</label>
    </ligand>
</feature>
<feature type="binding site" evidence="1">
    <location>
        <position position="1398"/>
    </location>
    <ligand>
        <name>Mg(2+)</name>
        <dbReference type="ChEBI" id="CHEBI:18420"/>
        <label>1</label>
    </ligand>
</feature>
<feature type="binding site" evidence="21 39">
    <location>
        <position position="1705"/>
    </location>
    <ligand>
        <name>Mg(2+)</name>
        <dbReference type="ChEBI" id="CHEBI:18420"/>
        <label>2</label>
    </ligand>
</feature>
<feature type="binding site" evidence="21 39">
    <location>
        <position position="1810"/>
    </location>
    <ligand>
        <name>Mg(2+)</name>
        <dbReference type="ChEBI" id="CHEBI:18420"/>
        <label>2</label>
    </ligand>
</feature>
<feature type="binding site" evidence="21 39">
    <location>
        <position position="1813"/>
    </location>
    <ligand>
        <name>Mg(2+)</name>
        <dbReference type="ChEBI" id="CHEBI:18420"/>
        <label>2</label>
    </ligand>
</feature>
<feature type="site" description="Important for activity" evidence="2">
    <location>
        <position position="1806"/>
    </location>
</feature>
<feature type="modified residue" description="Phosphoserine" evidence="41">
    <location>
        <position position="413"/>
    </location>
</feature>
<feature type="modified residue" description="Phosphoserine" evidence="41">
    <location>
        <position position="415"/>
    </location>
</feature>
<feature type="modified residue" description="Phosphoserine" evidence="40">
    <location>
        <position position="1016"/>
    </location>
</feature>
<feature type="modified residue" description="Phosphoserine" evidence="42">
    <location>
        <position position="1160"/>
    </location>
</feature>
<feature type="modified residue" description="Phosphoserine" evidence="42">
    <location>
        <position position="1460"/>
    </location>
</feature>
<feature type="modified residue" description="Phosphoserine" evidence="2">
    <location>
        <position position="1468"/>
    </location>
</feature>
<feature type="modified residue" description="Phosphoserine" evidence="42">
    <location>
        <position position="1470"/>
    </location>
</feature>
<feature type="modified residue" description="Phosphoserine" evidence="42">
    <location>
        <position position="1868"/>
    </location>
</feature>
<feature type="splice variant" id="VSP_055341" description="In isoform 3." evidence="33">
    <original>MKSPALQPLSMAG</original>
    <variation>MLAWESDHFLRIL</variation>
    <location>
        <begin position="1"/>
        <end position="13"/>
    </location>
</feature>
<feature type="splice variant" id="VSP_055342" description="In isoform 3." evidence="33">
    <location>
        <begin position="14"/>
        <end position="1115"/>
    </location>
</feature>
<feature type="splice variant" id="VSP_042832" description="In isoform 2." evidence="34">
    <original>LRRSEEDEEKEEDIEVPKAMGDIFESLAGAIYMDSGMSLETVWQVYYPMMRPLIEKFSANVPRSPVRELLEMEPETAKFSPAERTYDGKVRVTVEVVGKGKFKGVGRSYRIAKSAAARRALRSLKANQPQVPNS</original>
    <variation>KSFLQMYPVPLCENCLKWNQKLPNLARLRELTTGRSESLWK</variation>
    <location>
        <begin position="1789"/>
        <end position="1922"/>
    </location>
</feature>
<feature type="sequence variant" id="VAR_081917" description="Found in Wilms tumor from a patient with GLOW syndrome; uncertain significance; somatic mutation." evidence="31">
    <original>P</original>
    <variation>L</variation>
    <location>
        <position position="435"/>
    </location>
</feature>
<feature type="sequence variant" id="VAR_065301" description="In MNG1; dbSNP:rs387906934." evidence="26">
    <original>S</original>
    <variation>F</variation>
    <location>
        <position position="839"/>
    </location>
</feature>
<feature type="sequence variant" id="VAR_063150" description="In PPB; dbSNP:rs137852976." evidence="25">
    <original>L</original>
    <variation>R</variation>
    <location>
        <position position="1583"/>
    </location>
</feature>
<feature type="sequence variant" id="VAR_067091" description="In PPB; also found in non-epithelial ovarian tumor; somatic mutation; results in reduced RNase IIIb activity but retention of RNase IIIa activity." evidence="29 32">
    <original>E</original>
    <variation>K</variation>
    <location>
        <position position="1705"/>
    </location>
</feature>
<feature type="sequence variant" id="VAR_067092" description="In non-epithelial ovarian tumor; somatic mutation; results in reduced RNase IIIb activity but retention of RNase IIIa activity." evidence="29">
    <original>D</original>
    <variation>E</variation>
    <location>
        <position position="1709"/>
    </location>
</feature>
<feature type="sequence variant" id="VAR_067093" description="In non-epithelial ovarian tumor; somatic mutation; dbSNP:rs1555366979." evidence="29">
    <original>D</original>
    <variation>G</variation>
    <location>
        <position position="1709"/>
    </location>
</feature>
<feature type="sequence variant" id="VAR_067094" description="In PPB; also found in non-epithelial ovarian tumor; somatic mutation; results in reduced RNase IIIb activity but retention of RNase IIIa activity." evidence="29 32">
    <original>D</original>
    <variation>N</variation>
    <location>
        <position position="1709"/>
    </location>
</feature>
<feature type="sequence variant" id="VAR_081918" description="In GLOW; somatic mutation." evidence="31">
    <original>D</original>
    <variation>Y</variation>
    <location>
        <position position="1709"/>
    </location>
</feature>
<feature type="sequence variant" id="VAR_081919" description="In GLOW; somatic mutation." evidence="31">
    <original>D</original>
    <variation>V</variation>
    <location>
        <position position="1713"/>
    </location>
</feature>
<feature type="sequence variant" id="VAR_090039" description="In PPB." evidence="32">
    <original>G</original>
    <variation>R</variation>
    <location>
        <position position="1809"/>
    </location>
</feature>
<feature type="sequence variant" id="VAR_067095" description="In non-epithelial ovarian tumor; somatic mutation." evidence="29">
    <original>D</original>
    <variation>H</variation>
    <location>
        <position position="1810"/>
    </location>
</feature>
<feature type="sequence variant" id="VAR_067096" description="In non-epithelial ovarian tumor; somatic mutation; dbSNP:rs775912475." evidence="29">
    <original>D</original>
    <variation>N</variation>
    <location>
        <position position="1810"/>
    </location>
</feature>
<feature type="sequence variant" id="VAR_067097" description="In PPB; also found in non-epithelial ovarian tumor; somatic mutation." evidence="29 32">
    <original>D</original>
    <variation>Y</variation>
    <location>
        <position position="1810"/>
    </location>
</feature>
<feature type="sequence variant" id="VAR_067098" description="In non-epithelial ovarian tumor; somatic mutation." evidence="29">
    <original>E</original>
    <variation>G</variation>
    <location>
        <position position="1813"/>
    </location>
</feature>
<feature type="sequence variant" id="VAR_067099" description="In non-epithelial ovarian tumor; somatic mutation." evidence="29">
    <original>E</original>
    <variation>K</variation>
    <location>
        <position position="1813"/>
    </location>
</feature>
<feature type="sequence variant" id="VAR_067100" description="In PPB; also found in non-epithelial ovarian tumor; somatic mutation." evidence="29 32">
    <original>E</original>
    <variation>Q</variation>
    <location>
        <position position="1813"/>
    </location>
</feature>
<feature type="sequence variant" id="VAR_081920" description="Found in Wilms tumor from a patient with GLOW syndrome; uncertain significance; somatic mutation." evidence="31">
    <original>R</original>
    <variation>G</variation>
    <location>
        <position position="1898"/>
    </location>
</feature>
<feature type="mutagenesis site" description="2-fold decrease in activity.">
    <original>F</original>
    <variation>A</variation>
    <location>
        <position position="960"/>
    </location>
</feature>
<feature type="mutagenesis site" description="10-fold decrease in activity; when associated with Y-972.">
    <original>Y</original>
    <variation>A</variation>
    <location>
        <position position="971"/>
    </location>
</feature>
<feature type="mutagenesis site" description="10-fold decrease in activity; when associated with Y-971.">
    <original>Y</original>
    <variation>A</variation>
    <location>
        <position position="972"/>
    </location>
</feature>
<feature type="mutagenesis site" description="5-fold decrease in activity.">
    <original>E</original>
    <variation>A</variation>
    <location>
        <position position="1036"/>
    </location>
</feature>
<feature type="mutagenesis site" description="No effect on activity." evidence="11">
    <original>E</original>
    <variation>A</variation>
    <location>
        <position position="1313"/>
    </location>
</feature>
<feature type="mutagenesis site" description="Decreased activity. Loss of activity; when associated with D-1709." evidence="11">
    <original>D</original>
    <variation>A</variation>
    <location>
        <position position="1320"/>
    </location>
</feature>
<feature type="mutagenesis site" description="No effect on activity." evidence="11">
    <original>E</original>
    <variation>A</variation>
    <location>
        <position position="1340"/>
    </location>
</feature>
<feature type="mutagenesis site" description="Decreased activity. Loss of activity; when associated with E-1813." evidence="11">
    <original>E</original>
    <variation>A</variation>
    <location>
        <position position="1444"/>
    </location>
</feature>
<feature type="mutagenesis site" description="No effect on activity." evidence="11">
    <original>Q</original>
    <variation>A</variation>
    <location>
        <position position="1702"/>
    </location>
</feature>
<feature type="mutagenesis site" description="Decreased activity. Loss of activity; when associated with D-1320." evidence="11">
    <original>D</original>
    <variation>A</variation>
    <location>
        <position position="1709"/>
    </location>
</feature>
<feature type="mutagenesis site" description="No effect on activity." evidence="11">
    <original>P</original>
    <variation>E</variation>
    <location>
        <position position="1729"/>
    </location>
</feature>
<feature type="mutagenesis site" description="Decreased activity. Loss of activity; when associated with E-1444." evidence="11">
    <original>E</original>
    <variation>A</variation>
    <location>
        <position position="1813"/>
    </location>
</feature>
<feature type="sequence conflict" description="In Ref. 1; BAA78691." evidence="35" ref="1">
    <original>VLLTKELSYQIRGDFS</original>
    <variation>STTLLKSCLYLDLGETSA</variation>
    <location>
        <begin position="75"/>
        <end position="90"/>
    </location>
</feature>
<feature type="sequence conflict" description="In Ref. 1; BAA78691." evidence="35" ref="1">
    <original>I</original>
    <variation>F</variation>
    <location>
        <position position="189"/>
    </location>
</feature>
<feature type="sequence conflict" description="In Ref. 1; BAA78691." evidence="35" ref="1">
    <original>N</original>
    <variation>I</variation>
    <location>
        <position position="195"/>
    </location>
</feature>
<feature type="sequence conflict" description="In Ref. 1; BAA78691." evidence="35" ref="1">
    <original>C</original>
    <variation>W</variation>
    <location>
        <position position="214"/>
    </location>
</feature>
<feature type="sequence conflict" description="In Ref. 1; BAA78691." evidence="35" ref="1">
    <original>E</original>
    <variation>D</variation>
    <location>
        <position position="218"/>
    </location>
</feature>
<feature type="sequence conflict" description="In Ref. 1; BAA78691." evidence="35" ref="1">
    <original>I</original>
    <variation>F</variation>
    <location>
        <position position="223"/>
    </location>
</feature>
<feature type="sequence conflict" description="In Ref. 1; BAA78691." evidence="35" ref="1">
    <original>QQ</original>
    <variation>HS</variation>
    <location>
        <begin position="393"/>
        <end position="394"/>
    </location>
</feature>
<feature type="sequence conflict" description="In Ref. 1; BAA78691." evidence="35" ref="1">
    <original>KQ</original>
    <variation>NT</variation>
    <location>
        <begin position="492"/>
        <end position="493"/>
    </location>
</feature>
<feature type="sequence conflict" description="In Ref. 1; BAA78691." evidence="35" ref="1">
    <original>D</original>
    <variation>H</variation>
    <location>
        <position position="609"/>
    </location>
</feature>
<feature type="helix" evidence="45">
    <location>
        <begin position="268"/>
        <end position="282"/>
    </location>
</feature>
<feature type="helix" evidence="45">
    <location>
        <begin position="297"/>
        <end position="313"/>
    </location>
</feature>
<feature type="helix" evidence="45">
    <location>
        <begin position="315"/>
        <end position="335"/>
    </location>
</feature>
<feature type="helix" evidence="45">
    <location>
        <begin position="339"/>
        <end position="361"/>
    </location>
</feature>
<feature type="strand" evidence="45">
    <location>
        <begin position="363"/>
        <end position="367"/>
    </location>
</feature>
<feature type="helix" evidence="45">
    <location>
        <begin position="375"/>
        <end position="385"/>
    </location>
</feature>
<feature type="strand" evidence="46">
    <location>
        <begin position="747"/>
        <end position="750"/>
    </location>
</feature>
<feature type="helix" evidence="46">
    <location>
        <begin position="755"/>
        <end position="757"/>
    </location>
</feature>
<feature type="strand" evidence="44">
    <location>
        <begin position="768"/>
        <end position="780"/>
    </location>
</feature>
<feature type="helix" evidence="44">
    <location>
        <begin position="783"/>
        <end position="785"/>
    </location>
</feature>
<feature type="helix" evidence="44">
    <location>
        <begin position="795"/>
        <end position="797"/>
    </location>
</feature>
<feature type="strand" evidence="44">
    <location>
        <begin position="801"/>
        <end position="808"/>
    </location>
</feature>
<feature type="strand" evidence="44">
    <location>
        <begin position="816"/>
        <end position="820"/>
    </location>
</feature>
<feature type="strand" evidence="44">
    <location>
        <begin position="823"/>
        <end position="836"/>
    </location>
</feature>
<feature type="helix" evidence="44">
    <location>
        <begin position="840"/>
        <end position="855"/>
    </location>
</feature>
<feature type="turn" evidence="46">
    <location>
        <begin position="869"/>
        <end position="871"/>
    </location>
</feature>
<feature type="strand" evidence="44">
    <location>
        <begin position="877"/>
        <end position="883"/>
    </location>
</feature>
<feature type="strand" evidence="46">
    <location>
        <begin position="885"/>
        <end position="888"/>
    </location>
</feature>
<feature type="strand" evidence="44">
    <location>
        <begin position="890"/>
        <end position="892"/>
    </location>
</feature>
<feature type="helix" evidence="44">
    <location>
        <begin position="894"/>
        <end position="902"/>
    </location>
</feature>
<feature type="strand" evidence="44">
    <location>
        <begin position="906"/>
        <end position="908"/>
    </location>
</feature>
<feature type="strand" evidence="44">
    <location>
        <begin position="916"/>
        <end position="918"/>
    </location>
</feature>
<feature type="helix" evidence="44">
    <location>
        <begin position="924"/>
        <end position="927"/>
    </location>
</feature>
<feature type="strand" evidence="44">
    <location>
        <begin position="931"/>
        <end position="937"/>
    </location>
</feature>
<feature type="strand" evidence="44">
    <location>
        <begin position="939"/>
        <end position="941"/>
    </location>
</feature>
<feature type="strand" evidence="44">
    <location>
        <begin position="945"/>
        <end position="951"/>
    </location>
</feature>
<feature type="turn" evidence="46">
    <location>
        <begin position="956"/>
        <end position="958"/>
    </location>
</feature>
<feature type="helix" evidence="44">
    <location>
        <begin position="968"/>
        <end position="976"/>
    </location>
</feature>
<feature type="strand" evidence="44">
    <location>
        <begin position="987"/>
        <end position="992"/>
    </location>
</feature>
<feature type="strand" evidence="46">
    <location>
        <begin position="1003"/>
        <end position="1005"/>
    </location>
</feature>
<feature type="helix" evidence="44">
    <location>
        <begin position="1016"/>
        <end position="1030"/>
    </location>
</feature>
<feature type="helix" evidence="44">
    <location>
        <begin position="1035"/>
        <end position="1037"/>
    </location>
</feature>
<feature type="strand" evidence="44">
    <location>
        <begin position="1038"/>
        <end position="1040"/>
    </location>
</feature>
<feature type="helix" evidence="44">
    <location>
        <begin position="1045"/>
        <end position="1051"/>
    </location>
</feature>
<feature type="helix" evidence="44">
    <location>
        <begin position="1054"/>
        <end position="1061"/>
    </location>
</feature>
<feature type="helix" evidence="46">
    <location>
        <begin position="1069"/>
        <end position="1073"/>
    </location>
</feature>
<feature type="helix" evidence="46">
    <location>
        <begin position="1294"/>
        <end position="1297"/>
    </location>
</feature>
<feature type="strand" evidence="46">
    <location>
        <begin position="1300"/>
        <end position="1302"/>
    </location>
</feature>
<feature type="strand" evidence="46">
    <location>
        <begin position="1312"/>
        <end position="1315"/>
    </location>
</feature>
<feature type="helix" evidence="46">
    <location>
        <begin position="1316"/>
        <end position="1334"/>
    </location>
</feature>
<feature type="helix" evidence="46">
    <location>
        <begin position="1340"/>
        <end position="1350"/>
    </location>
</feature>
<feature type="helix" evidence="46">
    <location>
        <begin position="1353"/>
        <end position="1363"/>
    </location>
</feature>
<feature type="helix" evidence="46">
    <location>
        <begin position="1365"/>
        <end position="1368"/>
    </location>
</feature>
<feature type="helix" evidence="46">
    <location>
        <begin position="1376"/>
        <end position="1379"/>
    </location>
</feature>
<feature type="strand" evidence="46">
    <location>
        <begin position="1385"/>
        <end position="1388"/>
    </location>
</feature>
<feature type="turn" evidence="46">
    <location>
        <begin position="1548"/>
        <end position="1550"/>
    </location>
</feature>
<feature type="strand" evidence="46">
    <location>
        <begin position="1551"/>
        <end position="1554"/>
    </location>
</feature>
<feature type="helix" evidence="46">
    <location>
        <begin position="1556"/>
        <end position="1574"/>
    </location>
</feature>
<feature type="helix" evidence="46">
    <location>
        <begin position="1578"/>
        <end position="1586"/>
    </location>
</feature>
<feature type="turn" evidence="43">
    <location>
        <begin position="1662"/>
        <end position="1665"/>
    </location>
</feature>
<feature type="helix" evidence="43">
    <location>
        <begin position="1666"/>
        <end position="1673"/>
    </location>
</feature>
<feature type="helix" evidence="43">
    <location>
        <begin position="1680"/>
        <end position="1687"/>
    </location>
</feature>
<feature type="helix" evidence="43">
    <location>
        <begin position="1702"/>
        <end position="1722"/>
    </location>
</feature>
<feature type="helix" evidence="43">
    <location>
        <begin position="1729"/>
        <end position="1739"/>
    </location>
</feature>
<feature type="helix" evidence="43">
    <location>
        <begin position="1742"/>
        <end position="1751"/>
    </location>
</feature>
<feature type="helix" evidence="43">
    <location>
        <begin position="1754"/>
        <end position="1756"/>
    </location>
</feature>
<feature type="helix" evidence="43">
    <location>
        <begin position="1763"/>
        <end position="1778"/>
    </location>
</feature>
<feature type="helix" evidence="43">
    <location>
        <begin position="1806"/>
        <end position="1822"/>
    </location>
</feature>
<feature type="helix" evidence="43">
    <location>
        <begin position="1827"/>
        <end position="1847"/>
    </location>
</feature>
<feature type="helix" evidence="46">
    <location>
        <begin position="1853"/>
        <end position="1860"/>
    </location>
</feature>
<feature type="strand" evidence="46">
    <location>
        <begin position="1876"/>
        <end position="1879"/>
    </location>
</feature>
<feature type="strand" evidence="46">
    <location>
        <begin position="1881"/>
        <end position="1883"/>
    </location>
</feature>
<feature type="strand" evidence="46">
    <location>
        <begin position="1889"/>
        <end position="1891"/>
    </location>
</feature>
<feature type="strand" evidence="46">
    <location>
        <begin position="1894"/>
        <end position="1896"/>
    </location>
</feature>
<feature type="helix" evidence="46">
    <location>
        <begin position="1897"/>
        <end position="1911"/>
    </location>
</feature>
<evidence type="ECO:0000250" key="1"/>
<evidence type="ECO:0000250" key="2">
    <source>
        <dbReference type="UniProtKB" id="Q8R418"/>
    </source>
</evidence>
<evidence type="ECO:0000255" key="3">
    <source>
        <dbReference type="PROSITE-ProRule" id="PRU00142"/>
    </source>
</evidence>
<evidence type="ECO:0000255" key="4">
    <source>
        <dbReference type="PROSITE-ProRule" id="PRU00177"/>
    </source>
</evidence>
<evidence type="ECO:0000255" key="5">
    <source>
        <dbReference type="PROSITE-ProRule" id="PRU00266"/>
    </source>
</evidence>
<evidence type="ECO:0000255" key="6">
    <source>
        <dbReference type="PROSITE-ProRule" id="PRU00541"/>
    </source>
</evidence>
<evidence type="ECO:0000255" key="7">
    <source>
        <dbReference type="PROSITE-ProRule" id="PRU00542"/>
    </source>
</evidence>
<evidence type="ECO:0000255" key="8">
    <source>
        <dbReference type="PROSITE-ProRule" id="PRU00657"/>
    </source>
</evidence>
<evidence type="ECO:0000256" key="9">
    <source>
        <dbReference type="SAM" id="MobiDB-lite"/>
    </source>
</evidence>
<evidence type="ECO:0000269" key="10">
    <source>
    </source>
</evidence>
<evidence type="ECO:0000269" key="11">
    <source>
    </source>
</evidence>
<evidence type="ECO:0000269" key="12">
    <source>
    </source>
</evidence>
<evidence type="ECO:0000269" key="13">
    <source>
    </source>
</evidence>
<evidence type="ECO:0000269" key="14">
    <source>
    </source>
</evidence>
<evidence type="ECO:0000269" key="15">
    <source>
    </source>
</evidence>
<evidence type="ECO:0000269" key="16">
    <source>
    </source>
</evidence>
<evidence type="ECO:0000269" key="17">
    <source>
    </source>
</evidence>
<evidence type="ECO:0000269" key="18">
    <source>
    </source>
</evidence>
<evidence type="ECO:0000269" key="19">
    <source>
    </source>
</evidence>
<evidence type="ECO:0000269" key="20">
    <source>
    </source>
</evidence>
<evidence type="ECO:0000269" key="21">
    <source>
    </source>
</evidence>
<evidence type="ECO:0000269" key="22">
    <source>
    </source>
</evidence>
<evidence type="ECO:0000269" key="23">
    <source>
    </source>
</evidence>
<evidence type="ECO:0000269" key="24">
    <source>
    </source>
</evidence>
<evidence type="ECO:0000269" key="25">
    <source>
    </source>
</evidence>
<evidence type="ECO:0000269" key="26">
    <source>
    </source>
</evidence>
<evidence type="ECO:0000269" key="27">
    <source>
    </source>
</evidence>
<evidence type="ECO:0000269" key="28">
    <source>
    </source>
</evidence>
<evidence type="ECO:0000269" key="29">
    <source>
    </source>
</evidence>
<evidence type="ECO:0000269" key="30">
    <source>
    </source>
</evidence>
<evidence type="ECO:0000269" key="31">
    <source>
    </source>
</evidence>
<evidence type="ECO:0000269" key="32">
    <source>
    </source>
</evidence>
<evidence type="ECO:0000303" key="33">
    <source>
    </source>
</evidence>
<evidence type="ECO:0000303" key="34">
    <source>
    </source>
</evidence>
<evidence type="ECO:0000305" key="35"/>
<evidence type="ECO:0000305" key="36">
    <source>
    </source>
</evidence>
<evidence type="ECO:0000305" key="37">
    <source>
    </source>
</evidence>
<evidence type="ECO:0000305" key="38">
    <source>
    </source>
</evidence>
<evidence type="ECO:0007744" key="39">
    <source>
        <dbReference type="PDB" id="2EB1"/>
    </source>
</evidence>
<evidence type="ECO:0007744" key="40">
    <source>
    </source>
</evidence>
<evidence type="ECO:0007744" key="41">
    <source>
    </source>
</evidence>
<evidence type="ECO:0007744" key="42">
    <source>
    </source>
</evidence>
<evidence type="ECO:0007829" key="43">
    <source>
        <dbReference type="PDB" id="2EB1"/>
    </source>
</evidence>
<evidence type="ECO:0007829" key="44">
    <source>
        <dbReference type="PDB" id="4NGD"/>
    </source>
</evidence>
<evidence type="ECO:0007829" key="45">
    <source>
        <dbReference type="PDB" id="4WYQ"/>
    </source>
</evidence>
<evidence type="ECO:0007829" key="46">
    <source>
        <dbReference type="PDB" id="7XW2"/>
    </source>
</evidence>
<name>DICER_HUMAN</name>
<comment type="function">
    <text evidence="11 12 13 14 15 16 17 18 22">Double-stranded RNA (dsRNA) endoribonuclease playing a central role in short dsRNA-mediated post-transcriptional gene silencing. Cleaves naturally occurring long dsRNAs and short hairpin pre-microRNAs (miRNA) into fragments of twenty-one to twenty-three nucleotides with 3' overhang of two nucleotides, producing respectively short interfering RNAs (siRNA) and mature microRNAs. SiRNAs and miRNAs serve as guide to direct the RNA-induced silencing complex (RISC) to complementary RNAs to degrade them or prevent their translation. Gene silencing mediated by siRNAs, also called RNA interference, controls the elimination of transcripts from mobile and repetitive DNA elements of the genome but also the degradation of exogenous RNA of viral origin for instance. The miRNA pathway on the other side is a mean to specifically regulate the expression of target genes.</text>
</comment>
<comment type="catalytic activity">
    <reaction evidence="11 21">
        <text>Endonucleolytic cleavage to 5'-phosphomonoester.</text>
        <dbReference type="EC" id="3.1.26.3"/>
    </reaction>
</comment>
<comment type="cofactor">
    <cofactor evidence="36">
        <name>Mg(2+)</name>
        <dbReference type="ChEBI" id="CHEBI:18420"/>
    </cofactor>
    <cofactor evidence="36">
        <name>Mn(2+)</name>
        <dbReference type="ChEBI" id="CHEBI:29035"/>
    </cofactor>
    <text evidence="36">Binds 2 magnesium or manganese ions per subunit.</text>
</comment>
<comment type="subunit">
    <text evidence="10 12 13 14 15 16 17 18 19 20 21 22 23 24 30">Component of the RISC loading complex (RLC), or micro-RNA (miRNA) loading complex (miRLC), which is composed of DICER1, AGO2 and TARBP2; DICER1 and TARBP2 are required to process precursor miRNAs (pre-miRNAs) to mature miRNAs and then load them onto AGO2. Note that the trimeric RLC/miRLC is also referred to as RISC. Interacts with DHX9, AGO1, PIWIL1 and PRKRA. Associates with the 60S ribosome. Interacts with BCDIN3D. Interacts with AGO2, TARBP2, EIF6, MOV10 and RPL7A (60S ribosome subunit); they form a large RNA-induced silencing complex (RISC) (PubMed:17507929). Interacts (via Dicer dsRNA-binding fold domain) with ALOX5 (via PLAT domain); this interaction enhances arachidonate 5-lipoxygenase activity and modifies the miRNA precursor processing activity of DICER1 (PubMed:19022417).</text>
</comment>
<comment type="subunit">
    <text evidence="27">(Microbial infection) Interacts with ebolavirus transcriptional activator VP30; this interaction prevents TARBP2/TRBP binding to DICER1 and thus allows the virus to counteract host RNA silencing.</text>
</comment>
<comment type="subunit">
    <text evidence="27">(Microbial infection) Interacts with ebolavirus transcriptional activator VP35; this interaction prevents TARBP2/TRBP binding to DICER1 and thus allows the virus to counteract host RNA silencing.</text>
</comment>
<comment type="interaction">
    <interactant intactId="EBI-395506">
        <id>Q9UPY3</id>
    </interactant>
    <interactant intactId="EBI-6913056">
        <id>P55265-1</id>
        <label>ADAR</label>
    </interactant>
    <organismsDiffer>false</organismsDiffer>
    <experiments>4</experiments>
</comment>
<comment type="interaction">
    <interactant intactId="EBI-395506">
        <id>Q9UPY3</id>
    </interactant>
    <interactant intactId="EBI-6913210">
        <id>P55265-5</id>
        <label>ADAR</label>
    </interactant>
    <organismsDiffer>false</organismsDiffer>
    <experiments>8</experiments>
</comment>
<comment type="interaction">
    <interactant intactId="EBI-395506">
        <id>Q9UPY3</id>
    </interactant>
    <interactant intactId="EBI-527363">
        <id>Q9UL18</id>
        <label>AGO1</label>
    </interactant>
    <organismsDiffer>false</organismsDiffer>
    <experiments>8</experiments>
</comment>
<comment type="interaction">
    <interactant intactId="EBI-395506">
        <id>Q9UPY3</id>
    </interactant>
    <interactant intactId="EBI-528269">
        <id>Q9UKV8</id>
        <label>AGO2</label>
    </interactant>
    <organismsDiffer>false</organismsDiffer>
    <experiments>21</experiments>
</comment>
<comment type="interaction">
    <interactant intactId="EBI-395506">
        <id>Q9UPY3</id>
    </interactant>
    <interactant intactId="EBI-744193">
        <id>Q96C10</id>
        <label>DHX58</label>
    </interactant>
    <organismsDiffer>false</organismsDiffer>
    <experiments>2</experiments>
</comment>
<comment type="interaction">
    <interactant intactId="EBI-395506">
        <id>Q9UPY3</id>
    </interactant>
    <interactant intactId="EBI-640775">
        <id>P19525</id>
        <label>EIF2AK2</label>
    </interactant>
    <organismsDiffer>false</organismsDiffer>
    <experiments>2</experiments>
</comment>
<comment type="interaction">
    <interactant intactId="EBI-395506">
        <id>Q9UPY3</id>
    </interactant>
    <interactant intactId="EBI-527417">
        <id>Q96J94</id>
        <label>PIWIL1</label>
    </interactant>
    <organismsDiffer>false</organismsDiffer>
    <experiments>2</experiments>
</comment>
<comment type="interaction">
    <interactant intactId="EBI-395506">
        <id>Q9UPY3</id>
    </interactant>
    <interactant intactId="EBI-713955">
        <id>O75569</id>
        <label>PRKRA</label>
    </interactant>
    <organismsDiffer>false</organismsDiffer>
    <experiments>9</experiments>
</comment>
<comment type="interaction">
    <interactant intactId="EBI-395506">
        <id>Q9UPY3</id>
    </interactant>
    <interactant intactId="EBI-978581">
        <id>Q15633</id>
        <label>TARBP2</label>
    </interactant>
    <organismsDiffer>false</organismsDiffer>
    <experiments>25</experiments>
</comment>
<comment type="interaction">
    <interactant intactId="EBI-395506">
        <id>Q9UPY3</id>
    </interactant>
    <interactant intactId="EBI-6932080">
        <id>O43508</id>
        <label>TNFSF12</label>
    </interactant>
    <organismsDiffer>false</organismsDiffer>
    <experiments>3</experiments>
</comment>
<comment type="interaction">
    <interactant intactId="EBI-395506">
        <id>Q9UPY3</id>
    </interactant>
    <interactant intactId="EBI-528299">
        <id>Q8CJG0</id>
        <label>Ago2</label>
    </interactant>
    <organismsDiffer>true</organismsDiffer>
    <experiments>2</experiments>
</comment>
<comment type="interaction">
    <interactant intactId="EBI-395506">
        <id>Q9UPY3</id>
    </interactant>
    <interactant intactId="EBI-25747115">
        <id>Q9IK90</id>
        <label>M</label>
    </interactant>
    <organismsDiffer>true</organismsDiffer>
    <experiments>3</experiments>
</comment>
<comment type="interaction">
    <interactant intactId="EBI-395506">
        <id>Q9UPY3</id>
    </interactant>
    <interactant intactId="EBI-8332963">
        <id>P0C205</id>
    </interactant>
    <organismsDiffer>true</organismsDiffer>
    <experiments>7</experiments>
</comment>
<comment type="interaction">
    <interactant intactId="EBI-15569571">
        <id>Q9UPY3-1</id>
    </interactant>
    <interactant intactId="EBI-528269">
        <id>Q9UKV8</id>
        <label>AGO2</label>
    </interactant>
    <organismsDiffer>false</organismsDiffer>
    <experiments>14</experiments>
</comment>
<comment type="interaction">
    <interactant intactId="EBI-15569571">
        <id>Q9UPY3-1</id>
    </interactant>
    <interactant intactId="EBI-1049099">
        <id>Q92945</id>
        <label>KHSRP</label>
    </interactant>
    <organismsDiffer>false</organismsDiffer>
    <experiments>3</experiments>
</comment>
<comment type="interaction">
    <interactant intactId="EBI-15569571">
        <id>Q9UPY3-1</id>
    </interactant>
    <interactant intactId="EBI-295301">
        <id>P24928</id>
        <label>POLR2A</label>
    </interactant>
    <organismsDiffer>false</organismsDiffer>
    <experiments>3</experiments>
</comment>
<comment type="interaction">
    <interactant intactId="EBI-15569571">
        <id>Q9UPY3-1</id>
    </interactant>
    <interactant intactId="EBI-978581">
        <id>Q15633</id>
        <label>TARBP2</label>
    </interactant>
    <organismsDiffer>false</organismsDiffer>
    <experiments>5</experiments>
</comment>
<comment type="interaction">
    <interactant intactId="EBI-15569571">
        <id>Q9UPY3-1</id>
    </interactant>
    <interactant intactId="EBI-15569589">
        <id>Q61496</id>
        <label>Ddx4</label>
    </interactant>
    <organismsDiffer>true</organismsDiffer>
    <experiments>3</experiments>
</comment>
<comment type="subcellular location">
    <subcellularLocation>
        <location evidence="17">Cytoplasm</location>
    </subcellularLocation>
    <subcellularLocation>
        <location evidence="24">Cytoplasm</location>
        <location evidence="24">Perinuclear region</location>
    </subcellularLocation>
</comment>
<comment type="alternative products">
    <event type="alternative splicing"/>
    <isoform>
        <id>Q9UPY3-1</id>
        <name>1</name>
        <sequence type="displayed"/>
    </isoform>
    <isoform>
        <id>Q9UPY3-2</id>
        <name>2</name>
        <name>t-Dicer</name>
        <sequence type="described" ref="VSP_042832"/>
    </isoform>
    <isoform>
        <id>Q9UPY3-3</id>
        <name>3</name>
        <sequence type="described" ref="VSP_055341 VSP_055342"/>
    </isoform>
</comment>
<comment type="disease" evidence="25 32">
    <disease id="DI-02550">
        <name>Pleuropulmonary blastoma</name>
        <acronym>PPB</acronym>
        <description>A rare pediatric intrathoracic neoplasm. The tumor arises from the lung, pleura, or both, and appears to be purely mesenchymal in phenotype. It lacks malignant epithelial elements, a feature that distinguishes it from the classic adult-type pulmonary blastoma. It arises during fetal lung development and is often part of an inherited cancer syndrome. The tumor contain both epithelial and mesenchymal cells. Early in tumorigenesis, cysts form in lung airspaces, and these cysts are lined with benign-appearing epithelium. Mesenchymal cells susceptible to malignant transformation reside within the cyst walls and form a dense layer beneath the epithelial lining. In a subset of patients, overgrowth of the mesenchymal cells produces a sarcoma, a transition that is associated with a poorer prognosis. Some patients have multilocular cystic nephroma, a benign kidney tumor.</description>
        <dbReference type="MIM" id="601200"/>
    </disease>
    <text>The disease is caused by variants affecting the gene represented in this entry.</text>
</comment>
<comment type="disease" evidence="26">
    <disease id="DI-03075">
        <name>Goiter multinodular 1, with or without Sertoli-Leydig cell tumors</name>
        <acronym>MNG1</acronym>
        <description>A common disorder characterized by nodular overgrowth of the thyroid gland. Some individuals may also develop Sertoli-Leydig cell tumors, usually of the ovary.</description>
        <dbReference type="MIM" id="138800"/>
    </disease>
    <text>The disease is caused by variants affecting the gene represented in this entry.</text>
</comment>
<comment type="disease" evidence="28">
    <disease id="DI-03929">
        <name>Rhabdomyosarcoma, embryonal, 2</name>
        <acronym>RMSE2</acronym>
        <description>A form of rhabdomyosarcoma, a highly malignant tumor of striated muscle derived from primitive mesenchymal cells and exhibiting differentiation along rhabdomyoblastic lines. Rhabdomyosarcoma is one of the most frequently occurring soft tissue sarcomas and the most common in children. It occurs in four forms: alveolar, pleomorphic, embryonal and botryoidal rhabdomyosarcomas.</description>
        <dbReference type="MIM" id="180295"/>
    </disease>
    <text>The disease is caused by variants affecting the gene represented in this entry.</text>
</comment>
<comment type="disease" evidence="31">
    <disease id="DI-05455">
        <name>Global developmental delay, lung cysts, overgrowth, and Wilms tumor</name>
        <acronym>GLOW</acronym>
        <description>A disease characterized by the association of congenital nephromegaly, bilateral Wilms tumor, somatic overgrowth, developmental delay, macrocephaly, and bilateral lung cysts.</description>
        <dbReference type="MIM" id="618272"/>
    </disease>
    <text>The disease is caused by variants affecting the gene represented in this entry.</text>
</comment>
<comment type="disease">
    <text evidence="28 29">DICER1 mutations have been found in uterine cervix embryonal rhabdomyosarcoma, primitive neuroectodermal tumor, Wilms tumor, pulmonary sequestration and juvenile intestinal polyp (PubMed:21882293). Somatic missense mutations affecting the RNase IIIb domain of DICER1 are common in non-epithelial ovarian tumors. These mutations do not abolish DICER1 function but alter it in specific cell types, a novel mechanism through which perturbation of microRNA processing may be oncogenic (PubMed:22187960).</text>
</comment>
<comment type="similarity">
    <text evidence="8">Belongs to the helicase family. Dicer subfamily.</text>
</comment>
<comment type="caution">
    <text evidence="35">It is uncertain whether Met-1 or Met-11 is the initiator.</text>
</comment>
<comment type="caution">
    <text evidence="37 38">A paper describing truncating mutations of TARBP2 in tumor cells and resultant effects on DICER1 stability and miRNA processing has been retracted, due to concerns of image duplication in some of the figures.</text>
</comment>
<comment type="sequence caution" evidence="35">
    <conflict type="erroneous initiation">
        <sequence resource="EMBL-CDS" id="CAB38857"/>
    </conflict>
    <text>Truncated N-terminus.</text>
</comment>
<comment type="online information" name="Protein Spotlight">
    <link uri="https://www.proteinspotlight.org/back_issues/087"/>
    <text>The dark side of RNA - Issue 87 of October 2007</text>
</comment>
<organism>
    <name type="scientific">Homo sapiens</name>
    <name type="common">Human</name>
    <dbReference type="NCBI Taxonomy" id="9606"/>
    <lineage>
        <taxon>Eukaryota</taxon>
        <taxon>Metazoa</taxon>
        <taxon>Chordata</taxon>
        <taxon>Craniata</taxon>
        <taxon>Vertebrata</taxon>
        <taxon>Euteleostomi</taxon>
        <taxon>Mammalia</taxon>
        <taxon>Eutheria</taxon>
        <taxon>Euarchontoglires</taxon>
        <taxon>Primates</taxon>
        <taxon>Haplorrhini</taxon>
        <taxon>Catarrhini</taxon>
        <taxon>Hominidae</taxon>
        <taxon>Homo</taxon>
    </lineage>
</organism>
<accession>Q9UPY3</accession>
<accession>A7E2D3</accession>
<accession>B3KRG4</accession>
<accession>E0AD28</accession>
<accession>O95943</accession>
<accession>Q9UQ02</accession>
<proteinExistence type="evidence at protein level"/>
<gene>
    <name type="primary">DICER1</name>
    <name type="synonym">DICER</name>
    <name type="synonym">HERNA</name>
    <name type="synonym">KIAA0928</name>
</gene>